<accession>P02489</accession>
<accession>A0A140G945</accession>
<accession>E9PHE4</accession>
<accession>Q53X53</accession>
<organism>
    <name type="scientific">Homo sapiens</name>
    <name type="common">Human</name>
    <dbReference type="NCBI Taxonomy" id="9606"/>
    <lineage>
        <taxon>Eukaryota</taxon>
        <taxon>Metazoa</taxon>
        <taxon>Chordata</taxon>
        <taxon>Craniata</taxon>
        <taxon>Vertebrata</taxon>
        <taxon>Euteleostomi</taxon>
        <taxon>Mammalia</taxon>
        <taxon>Eutheria</taxon>
        <taxon>Euarchontoglires</taxon>
        <taxon>Primates</taxon>
        <taxon>Haplorrhini</taxon>
        <taxon>Catarrhini</taxon>
        <taxon>Hominidae</taxon>
        <taxon>Homo</taxon>
    </lineage>
</organism>
<protein>
    <recommendedName>
        <fullName>Alpha-crystallin A chain</fullName>
    </recommendedName>
    <alternativeName>
        <fullName>Heat shock protein beta-4</fullName>
        <shortName>HspB4</shortName>
    </alternativeName>
    <alternativeName>
        <fullName>Heat shock protein family B member 4</fullName>
    </alternativeName>
    <component>
        <recommendedName>
            <fullName>Alpha-crystallin A(1-172)</fullName>
        </recommendedName>
    </component>
    <component>
        <recommendedName>
            <fullName>Alpha-crystallin A(1-168)</fullName>
        </recommendedName>
    </component>
    <component>
        <recommendedName>
            <fullName>Alpha-crystallin A(1-162)</fullName>
        </recommendedName>
    </component>
</protein>
<feature type="chain" id="PRO_0000125865" description="Alpha-crystallin A chain">
    <location>
        <begin position="1"/>
        <end position="173"/>
    </location>
</feature>
<feature type="chain" id="PRO_0000226639" description="Alpha-crystallin A(1-172)">
    <location>
        <begin position="1"/>
        <end position="172"/>
    </location>
</feature>
<feature type="chain" id="PRO_0000423503" description="Alpha-crystallin A(1-168)">
    <location>
        <begin position="1"/>
        <end position="168"/>
    </location>
</feature>
<feature type="chain" id="PRO_0000423504" description="Alpha-crystallin A(1-162)">
    <location>
        <begin position="1"/>
        <end position="162"/>
    </location>
</feature>
<feature type="domain" description="sHSP" evidence="3">
    <location>
        <begin position="52"/>
        <end position="164"/>
    </location>
</feature>
<feature type="region of interest" description="Required for complex formation with BFSP1 and BFSP2; during homooligomerization, mediates the association of 2 dimers to form a tetramer" evidence="45 50">
    <location>
        <begin position="1"/>
        <end position="63"/>
    </location>
</feature>
<feature type="binding site" evidence="2">
    <location>
        <position position="100"/>
    </location>
    <ligand>
        <name>Zn(2+)</name>
        <dbReference type="ChEBI" id="CHEBI:29105"/>
        <label>1</label>
    </ligand>
</feature>
<feature type="binding site" evidence="2">
    <location>
        <position position="102"/>
    </location>
    <ligand>
        <name>Zn(2+)</name>
        <dbReference type="ChEBI" id="CHEBI:29105"/>
        <label>1</label>
    </ligand>
</feature>
<feature type="binding site" evidence="34">
    <location>
        <position position="107"/>
    </location>
    <ligand>
        <name>Zn(2+)</name>
        <dbReference type="ChEBI" id="CHEBI:29105"/>
        <label>2</label>
    </ligand>
</feature>
<feature type="binding site" evidence="2">
    <location>
        <position position="154"/>
    </location>
    <ligand>
        <name>Zn(2+)</name>
        <dbReference type="ChEBI" id="CHEBI:29105"/>
        <label>3</label>
    </ligand>
</feature>
<feature type="site" description="Susceptible to oxidation">
    <location>
        <position position="1"/>
    </location>
</feature>
<feature type="site" description="Susceptible to oxidation">
    <location>
        <position position="18"/>
    </location>
</feature>
<feature type="site" description="Susceptible to oxidation">
    <location>
        <position position="34"/>
    </location>
</feature>
<feature type="site" description="Susceptible to oxidation">
    <location>
        <position position="138"/>
    </location>
</feature>
<feature type="modified residue" description="N-acetylmethionine" evidence="54">
    <location>
        <position position="1"/>
    </location>
</feature>
<feature type="modified residue" description="Deamidated glutamine; partial" evidence="56">
    <location>
        <position position="6"/>
    </location>
</feature>
<feature type="modified residue" description="Phosphoserine" evidence="56">
    <location>
        <position position="45"/>
    </location>
</feature>
<feature type="modified residue" description="Deamidated glutamine; partial" evidence="56">
    <location>
        <position position="50"/>
    </location>
</feature>
<feature type="modified residue" description="N6-acetyllysine" evidence="32 59">
    <location>
        <position position="70"/>
    </location>
</feature>
<feature type="modified residue" description="Deamidated glutamine; partial" evidence="56">
    <location>
        <position position="90"/>
    </location>
</feature>
<feature type="modified residue" description="N6-acetyllysine" evidence="32">
    <location>
        <position position="99"/>
    </location>
</feature>
<feature type="modified residue" description="Deamidated asparagine; partial" evidence="53 56 58 59">
    <location>
        <position position="101"/>
    </location>
</feature>
<feature type="modified residue" description="Phosphoserine" evidence="53 55 56">
    <location>
        <position position="122"/>
    </location>
</feature>
<feature type="modified residue" description="Deamidated asparagine; partial" evidence="21">
    <location>
        <position position="123"/>
    </location>
</feature>
<feature type="modified residue" description="Deamidated glutamine; partial" evidence="56">
    <location>
        <position position="147"/>
    </location>
</feature>
<feature type="glycosylation site" description="O-linked (GlcNAc) serine" evidence="1">
    <location>
        <position position="162"/>
    </location>
</feature>
<feature type="disulfide bond" evidence="50 53 56">
    <location>
        <begin position="131"/>
        <end position="142"/>
    </location>
</feature>
<feature type="sequence variant" id="VAR_084768" description="In CTRCT9; uncertain significance; dbSNP:rs74315440." evidence="5">
    <location>
        <begin position="9"/>
        <end position="173"/>
    </location>
</feature>
<feature type="sequence variant" id="VAR_070032" description="In CTRCT9; delays HSP70 expression increase in response to heat shock; dbSNP:rs397515624." evidence="14 20 23 25 29 38 51">
    <original>R</original>
    <variation>C</variation>
    <location>
        <position position="12"/>
    </location>
</feature>
<feature type="sequence variant" id="VAR_084769" description="In CTRCT9; reduces protein solubility." evidence="48 49">
    <original>R</original>
    <variation>L</variation>
    <location>
        <position position="12"/>
    </location>
</feature>
<feature type="sequence variant" id="VAR_046892" description="In CTRCT9." evidence="9">
    <original>R</original>
    <variation>L</variation>
    <location>
        <position position="21"/>
    </location>
</feature>
<feature type="sequence variant" id="VAR_084770" description="In CTRCT9; decreases oligomer formation; dbSNP:rs397515626." evidence="35 42">
    <original>R</original>
    <variation>Q</variation>
    <location>
        <position position="21"/>
    </location>
</feature>
<feature type="sequence variant" id="VAR_084771" description="In CTRCT9; dbSNP:rs397515625." evidence="14 20 22 37 46 47 49">
    <original>R</original>
    <variation>W</variation>
    <location>
        <position position="21"/>
    </location>
</feature>
<feature type="sequence variant" id="VAR_038375" description="In CTRCT9; dbSNP:rs74315441." evidence="8 22 52">
    <original>R</original>
    <variation>C</variation>
    <location>
        <position position="49"/>
    </location>
</feature>
<feature type="sequence variant" id="VAR_084772" description="In CTRCT9; uncertain significance; dbSNP:rs397515623." evidence="16 20 44">
    <original>R</original>
    <variation>C</variation>
    <location>
        <position position="54"/>
    </location>
</feature>
<feature type="sequence variant" id="VAR_084773" description="In CTRCT9; uncertain significance." evidence="39">
    <original>R</original>
    <variation>L</variation>
    <location>
        <position position="54"/>
    </location>
</feature>
<feature type="sequence variant" id="VAR_084774" description="In CTRCT9; uncertain significance; dbSNP:rs777728814." evidence="36">
    <original>R</original>
    <variation>P</variation>
    <location>
        <position position="54"/>
    </location>
</feature>
<feature type="sequence variant" id="VAR_084775" description="In CTRCT9; uncertain significance; dbSNP:rs199640007." evidence="43">
    <original>R</original>
    <variation>Q</variation>
    <location>
        <position position="65"/>
    </location>
</feature>
<feature type="sequence variant" id="VAR_084776" description="In CTRCT9; uncertain significance; reduced chaperone-like activity in vitro." evidence="26">
    <original>F</original>
    <variation>L</variation>
    <location>
        <position position="71"/>
    </location>
</feature>
<feature type="sequence variant" id="VAR_084777" description="In CTRCT9; forms inclusion bodies, decreases chaperone activity, decreases protein stability at 45 degrees Celsius and increases protein aggregate formation in response to DTT in vitro; dbSNP:rs398122947." evidence="11 17 30">
    <original>G</original>
    <variation>R</variation>
    <location>
        <position position="98"/>
    </location>
</feature>
<feature type="sequence variant" id="VAR_036564" description="In a breast cancer sample; somatic mutation." evidence="12">
    <original>D</original>
    <variation>H</variation>
    <location>
        <position position="105"/>
    </location>
</feature>
<feature type="sequence variant" id="VAR_003819" description="In CTRCT9; zonular central nuclear cataract; reduced chaperone-like activity and increased membrane-binding capacity; dbSNP:rs74315439." evidence="6 10 13 27 49 57">
    <original>R</original>
    <variation>C</variation>
    <location>
        <position position="116"/>
    </location>
</feature>
<feature type="sequence variant" id="VAR_046893" description="In CTRCT9; reverse phase-high-performance liquid chromatography suggests an increased hydrophobicity of the mutant protein; loss of chaperone activity of the mutant is seen in DL-dithiothreitol-induced insulin aggregation assay; fast protein liquid chromatography purification shows that the mutant protein has increased binding affinity to lysozyme; dbSNP:rs121912973." evidence="18 19 31 33">
    <original>R</original>
    <variation>H</variation>
    <location>
        <position position="116"/>
    </location>
</feature>
<feature type="sequence variant" id="VAR_084779" description="In CTRCT9; uncertain significance; dbSNP:rs367826363." evidence="30">
    <original>RY</original>
    <variation>H</variation>
    <location>
        <begin position="117"/>
        <end position="118"/>
    </location>
</feature>
<feature type="sequence variant" id="VAR_084778" description="In CTRCT9." evidence="40">
    <location>
        <position position="117"/>
    </location>
</feature>
<feature type="sequence variant" id="VAR_084780" description="In CTRCT9; uncertain significance; dbSNP:rs760170206." evidence="43">
    <original>R</original>
    <variation>H</variation>
    <location>
        <position position="119"/>
    </location>
</feature>
<feature type="sequence variant" id="VAR_084781" description="In CTRCT9; results in protein aggregation in the cytoplasm." evidence="41">
    <original>L</original>
    <variation>P</variation>
    <location>
        <position position="139"/>
    </location>
</feature>
<feature type="mutagenesis site" description="Impairs chaperone activity." evidence="21">
    <original>N</original>
    <variation>D</variation>
    <location>
        <position position="123"/>
    </location>
</feature>
<feature type="sequence conflict" description="In Ref. 10; AAA52105." evidence="61" ref="10">
    <original>S</original>
    <variation>T</variation>
    <location>
        <position position="45"/>
    </location>
</feature>
<feature type="sequence conflict" description="In Ref. 2." evidence="61" ref="2">
    <original>THA</original>
    <variation>HT</variation>
    <location>
        <begin position="153"/>
        <end position="155"/>
    </location>
</feature>
<comment type="function">
    <text evidence="17 26 32 45 50 60">Contributes to the transparency and refractive index of the lens (PubMed:18302245). In its oxidized form (absence of intramolecular disulfide bond), acts as a chaperone, preventing aggregation of various proteins under a wide range of stress conditions (PubMed:18199971, PubMed:19595763, PubMed:22120592, PubMed:31792453). Required for the correct formation of lens intermediate filaments as part of a complex composed of BFSP1, BFSP2 and CRYAA (PubMed:28935373).</text>
</comment>
<comment type="subunit">
    <text evidence="2 15 28 34 35 45 50">Heteropolymer composed of three CRYAA and one CRYAB subunits (PubMed:20836128). Inter-subunit bridging via zinc ions enhances stability, which is crucial as there is no protein turn over in the lens (PubMed:22890888). Can also form homodimers and homotetramers (dimers of dimers) which serve as the building blocks of homooligomers (PubMed:17909943, PubMed:23255486, PubMed:31792453). Within homooligomers, the zinc-binding motif is created from residues of 3 different molecules. His-100 and Glu-102 from one molecule are ligands of the zinc ion, and His-107 and His-154 residues from additional molecules complete the site with tetrahedral coordination geometry (By similarity). Part of a complex required for lens intermediate filament formation composed of BFSP1, BFSP2 and CRYAA (PubMed:28935373).</text>
</comment>
<comment type="interaction">
    <interactant intactId="EBI-6875961">
        <id>P02489</id>
    </interactant>
    <interactant intactId="EBI-12811089">
        <id>Q8NC06-3</id>
        <label>ACBD4</label>
    </interactant>
    <organismsDiffer>false</organismsDiffer>
    <experiments>3</experiments>
</comment>
<comment type="interaction">
    <interactant intactId="EBI-6875961">
        <id>P02489</id>
    </interactant>
    <interactant intactId="EBI-2809187">
        <id>P35611</id>
        <label>ADD1</label>
    </interactant>
    <organismsDiffer>false</organismsDiffer>
    <experiments>3</experiments>
</comment>
<comment type="interaction">
    <interactant intactId="EBI-6875961">
        <id>P02489</id>
    </interactant>
    <interactant intactId="EBI-2875816">
        <id>Q9NP61</id>
        <label>ARFGAP3</label>
    </interactant>
    <organismsDiffer>false</organismsDiffer>
    <experiments>3</experiments>
</comment>
<comment type="interaction">
    <interactant intactId="EBI-6875961">
        <id>P02489</id>
    </interactant>
    <interactant intactId="EBI-747185">
        <id>O95817</id>
        <label>BAG3</label>
    </interactant>
    <organismsDiffer>false</organismsDiffer>
    <experiments>4</experiments>
</comment>
<comment type="interaction">
    <interactant intactId="EBI-6875961">
        <id>P02489</id>
    </interactant>
    <interactant intactId="EBI-742750">
        <id>Q8TBE0</id>
        <label>BAHD1</label>
    </interactant>
    <organismsDiffer>false</organismsDiffer>
    <experiments>3</experiments>
</comment>
<comment type="interaction">
    <interactant intactId="EBI-6875961">
        <id>P02489</id>
    </interactant>
    <interactant intactId="EBI-9092016">
        <id>Q9UQB8-6</id>
        <label>BAIAP2</label>
    </interactant>
    <organismsDiffer>false</organismsDiffer>
    <experiments>3</experiments>
</comment>
<comment type="interaction">
    <interactant intactId="EBI-6875961">
        <id>P02489</id>
    </interactant>
    <interactant intactId="EBI-12108466">
        <id>Q9H0W9-3</id>
        <label>C11orf54</label>
    </interactant>
    <organismsDiffer>false</organismsDiffer>
    <experiments>3</experiments>
</comment>
<comment type="interaction">
    <interactant intactId="EBI-6875961">
        <id>P02489</id>
    </interactant>
    <interactant intactId="EBI-12300031">
        <id>Q9NNX6-10</id>
        <label>CD209</label>
    </interactant>
    <organismsDiffer>false</organismsDiffer>
    <experiments>3</experiments>
</comment>
<comment type="interaction">
    <interactant intactId="EBI-6875961">
        <id>P02489</id>
    </interactant>
    <interactant intactId="EBI-1773949">
        <id>Q9BXL8</id>
        <label>CDCA4</label>
    </interactant>
    <organismsDiffer>false</organismsDiffer>
    <experiments>3</experiments>
</comment>
<comment type="interaction">
    <interactant intactId="EBI-6875961">
        <id>P02489</id>
    </interactant>
    <interactant intactId="EBI-11039720">
        <id>P49336-2</id>
        <label>CDK8</label>
    </interactant>
    <organismsDiffer>false</organismsDiffer>
    <experiments>3</experiments>
</comment>
<comment type="interaction">
    <interactant intactId="EBI-6875961">
        <id>P02489</id>
    </interactant>
    <interactant intactId="EBI-2528238">
        <id>P20849</id>
        <label>COL9A1</label>
    </interactant>
    <organismsDiffer>false</organismsDiffer>
    <experiments>3</experiments>
</comment>
<comment type="interaction">
    <interactant intactId="EBI-6875961">
        <id>P02489</id>
    </interactant>
    <interactant intactId="EBI-10260134">
        <id>Q86WV2</id>
        <label>COX4I1</label>
    </interactant>
    <organismsDiffer>false</organismsDiffer>
    <experiments>3</experiments>
</comment>
<comment type="interaction">
    <interactant intactId="EBI-6875961">
        <id>P02489</id>
    </interactant>
    <interactant intactId="EBI-6875961">
        <id>P02489</id>
        <label>CRYAA</label>
    </interactant>
    <organismsDiffer>false</organismsDiffer>
    <experiments>12</experiments>
</comment>
<comment type="interaction">
    <interactant intactId="EBI-6875961">
        <id>P02489</id>
    </interactant>
    <interactant intactId="EBI-739060">
        <id>P02511</id>
        <label>CRYAB</label>
    </interactant>
    <organismsDiffer>false</organismsDiffer>
    <experiments>18</experiments>
</comment>
<comment type="interaction">
    <interactant intactId="EBI-6875961">
        <id>P02489</id>
    </interactant>
    <interactant intactId="EBI-1965681">
        <id>P26998</id>
        <label>CRYBB3</label>
    </interactant>
    <organismsDiffer>false</organismsDiffer>
    <experiments>3</experiments>
</comment>
<comment type="interaction">
    <interactant intactId="EBI-6875961">
        <id>P02489</id>
    </interactant>
    <interactant intactId="EBI-6875941">
        <id>P07315</id>
        <label>CRYGC</label>
    </interactant>
    <organismsDiffer>false</organismsDiffer>
    <experiments>3</experiments>
</comment>
<comment type="interaction">
    <interactant intactId="EBI-6875961">
        <id>P02489</id>
    </interactant>
    <interactant intactId="EBI-3443946">
        <id>Q9Y6W6</id>
        <label>DUSP10</label>
    </interactant>
    <organismsDiffer>false</organismsDiffer>
    <experiments>3</experiments>
</comment>
<comment type="interaction">
    <interactant intactId="EBI-6875961">
        <id>P02489</id>
    </interactant>
    <interactant intactId="EBI-3924130">
        <id>Q99944</id>
        <label>EGFL8</label>
    </interactant>
    <organismsDiffer>false</organismsDiffer>
    <experiments>4</experiments>
</comment>
<comment type="interaction">
    <interactant intactId="EBI-6875961">
        <id>P02489</id>
    </interactant>
    <interactant intactId="EBI-347740">
        <id>P60228</id>
        <label>EIF3E</label>
    </interactant>
    <organismsDiffer>false</organismsDiffer>
    <experiments>3</experiments>
</comment>
<comment type="interaction">
    <interactant intactId="EBI-6875961">
        <id>P02489</id>
    </interactant>
    <interactant intactId="EBI-970310">
        <id>P23588</id>
        <label>EIF4B</label>
    </interactant>
    <organismsDiffer>false</organismsDiffer>
    <experiments>3</experiments>
</comment>
<comment type="interaction">
    <interactant intactId="EBI-6875961">
        <id>P02489</id>
    </interactant>
    <interactant intactId="EBI-10213520">
        <id>Q6NXG1</id>
        <label>ESRP1</label>
    </interactant>
    <organismsDiffer>false</organismsDiffer>
    <experiments>3</experiments>
</comment>
<comment type="interaction">
    <interactant intactId="EBI-6875961">
        <id>P02489</id>
    </interactant>
    <interactant intactId="EBI-21567429">
        <id>Q6NXG1-3</id>
        <label>ESRP1</label>
    </interactant>
    <organismsDiffer>false</organismsDiffer>
    <experiments>3</experiments>
</comment>
<comment type="interaction">
    <interactant intactId="EBI-6875961">
        <id>P02489</id>
    </interactant>
    <interactant intactId="EBI-12013806">
        <id>Q6NZ36-4</id>
        <label>FAAP20</label>
    </interactant>
    <organismsDiffer>false</organismsDiffer>
    <experiments>3</experiments>
</comment>
<comment type="interaction">
    <interactant intactId="EBI-6875961">
        <id>P02489</id>
    </interactant>
    <interactant intactId="EBI-11793142">
        <id>Q96GL9</id>
        <label>FAM163A</label>
    </interactant>
    <organismsDiffer>false</organismsDiffer>
    <experiments>3</experiments>
</comment>
<comment type="interaction">
    <interactant intactId="EBI-6875961">
        <id>P02489</id>
    </interactant>
    <interactant intactId="EBI-618189">
        <id>Q06547-2</id>
        <label>GABPB1</label>
    </interactant>
    <organismsDiffer>false</organismsDiffer>
    <experiments>3</experiments>
</comment>
<comment type="interaction">
    <interactant intactId="EBI-6875961">
        <id>P02489</id>
    </interactant>
    <interactant intactId="EBI-9090198">
        <id>P15976-2</id>
        <label>GATA1</label>
    </interactant>
    <organismsDiffer>false</organismsDiffer>
    <experiments>3</experiments>
</comment>
<comment type="interaction">
    <interactant intactId="EBI-6875961">
        <id>P02489</id>
    </interactant>
    <interactant intactId="EBI-8799578">
        <id>Q9NXC2</id>
        <label>GFOD1</label>
    </interactant>
    <organismsDiffer>false</organismsDiffer>
    <experiments>3</experiments>
</comment>
<comment type="interaction">
    <interactant intactId="EBI-6875961">
        <id>P02489</id>
    </interactant>
    <interactant intactId="EBI-739467">
        <id>Q9H8Y8</id>
        <label>GORASP2</label>
    </interactant>
    <organismsDiffer>false</organismsDiffer>
    <experiments>12</experiments>
</comment>
<comment type="interaction">
    <interactant intactId="EBI-6875961">
        <id>P02489</id>
    </interactant>
    <interactant intactId="EBI-12353035">
        <id>Q13322-4</id>
        <label>GRB10</label>
    </interactant>
    <organismsDiffer>false</organismsDiffer>
    <experiments>3</experiments>
</comment>
<comment type="interaction">
    <interactant intactId="EBI-6875961">
        <id>P02489</id>
    </interactant>
    <interactant intactId="EBI-10178933">
        <id>V9HW27</id>
        <label>HEL-S-101</label>
    </interactant>
    <organismsDiffer>false</organismsDiffer>
    <experiments>3</experiments>
</comment>
<comment type="interaction">
    <interactant intactId="EBI-6875961">
        <id>P02489</id>
    </interactant>
    <interactant intactId="EBI-713401">
        <id>Q9P0W2</id>
        <label>HMG20B</label>
    </interactant>
    <organismsDiffer>false</organismsDiffer>
    <experiments>4</experiments>
</comment>
<comment type="interaction">
    <interactant intactId="EBI-6875961">
        <id>P02489</id>
    </interactant>
    <interactant intactId="EBI-17494170">
        <id>Q4VB01</id>
        <label>HOXB1</label>
    </interactant>
    <organismsDiffer>false</organismsDiffer>
    <experiments>3</experiments>
</comment>
<comment type="interaction">
    <interactant intactId="EBI-6875961">
        <id>P02489</id>
    </interactant>
    <interactant intactId="EBI-352682">
        <id>P04792</id>
        <label>HSPB1</label>
    </interactant>
    <organismsDiffer>false</organismsDiffer>
    <experiments>6</experiments>
</comment>
<comment type="interaction">
    <interactant intactId="EBI-6875961">
        <id>P02489</id>
    </interactant>
    <interactant intactId="EBI-517086">
        <id>O43464</id>
        <label>HTRA2</label>
    </interactant>
    <organismsDiffer>false</organismsDiffer>
    <experiments>3</experiments>
</comment>
<comment type="interaction">
    <interactant intactId="EBI-6875961">
        <id>P02489</id>
    </interactant>
    <interactant intactId="EBI-466029">
        <id>P42858</id>
        <label>HTT</label>
    </interactant>
    <organismsDiffer>false</organismsDiffer>
    <experiments>3</experiments>
</comment>
<comment type="interaction">
    <interactant intactId="EBI-6875961">
        <id>P02489</id>
    </interactant>
    <interactant intactId="EBI-17178971">
        <id>Q14005-2</id>
        <label>IL16</label>
    </interactant>
    <organismsDiffer>false</organismsDiffer>
    <experiments>3</experiments>
</comment>
<comment type="interaction">
    <interactant intactId="EBI-6875961">
        <id>P02489</id>
    </interactant>
    <interactant intactId="EBI-6509505">
        <id>Q0VD86</id>
        <label>INCA1</label>
    </interactant>
    <organismsDiffer>false</organismsDiffer>
    <experiments>3</experiments>
</comment>
<comment type="interaction">
    <interactant intactId="EBI-6875961">
        <id>P02489</id>
    </interactant>
    <interactant intactId="EBI-10975473">
        <id>O60333-2</id>
        <label>KIF1B</label>
    </interactant>
    <organismsDiffer>false</organismsDiffer>
    <experiments>3</experiments>
</comment>
<comment type="interaction">
    <interactant intactId="EBI-6875961">
        <id>P02489</id>
    </interactant>
    <interactant intactId="EBI-8472267">
        <id>P57682</id>
        <label>KLF3</label>
    </interactant>
    <organismsDiffer>false</organismsDiffer>
    <experiments>3</experiments>
</comment>
<comment type="interaction">
    <interactant intactId="EBI-6875961">
        <id>P02489</id>
    </interactant>
    <interactant intactId="EBI-714379">
        <id>Q9Y2M5</id>
        <label>KLHL20</label>
    </interactant>
    <organismsDiffer>false</organismsDiffer>
    <experiments>3</experiments>
</comment>
<comment type="interaction">
    <interactant intactId="EBI-6875961">
        <id>P02489</id>
    </interactant>
    <interactant intactId="EBI-739648">
        <id>Q14533</id>
        <label>KRT81</label>
    </interactant>
    <organismsDiffer>false</organismsDiffer>
    <experiments>3</experiments>
</comment>
<comment type="interaction">
    <interactant intactId="EBI-6875961">
        <id>P02489</id>
    </interactant>
    <interactant intactId="EBI-1048945">
        <id>Q3LI72</id>
        <label>KRTAP19-5</label>
    </interactant>
    <organismsDiffer>false</organismsDiffer>
    <experiments>3</experiments>
</comment>
<comment type="interaction">
    <interactant intactId="EBI-6875961">
        <id>P02489</id>
    </interactant>
    <interactant intactId="EBI-10241353">
        <id>Q3SYF9</id>
        <label>KRTAP19-7</label>
    </interactant>
    <organismsDiffer>false</organismsDiffer>
    <experiments>3</experiments>
</comment>
<comment type="interaction">
    <interactant intactId="EBI-6875961">
        <id>P02489</id>
    </interactant>
    <interactant intactId="EBI-10261141">
        <id>Q8IUC2</id>
        <label>KRTAP8-1</label>
    </interactant>
    <organismsDiffer>false</organismsDiffer>
    <experiments>3</experiments>
</comment>
<comment type="interaction">
    <interactant intactId="EBI-6875961">
        <id>P02489</id>
    </interactant>
    <interactant intactId="EBI-1052558">
        <id>Q92615</id>
        <label>LARP4B</label>
    </interactant>
    <organismsDiffer>false</organismsDiffer>
    <experiments>3</experiments>
</comment>
<comment type="interaction">
    <interactant intactId="EBI-6875961">
        <id>P02489</id>
    </interactant>
    <interactant intactId="EBI-9088686">
        <id>Q14847-2</id>
        <label>LASP1</label>
    </interactant>
    <organismsDiffer>false</organismsDiffer>
    <experiments>3</experiments>
</comment>
<comment type="interaction">
    <interactant intactId="EBI-6875961">
        <id>P02489</id>
    </interactant>
    <interactant intactId="EBI-9088829">
        <id>Q6DKI2</id>
        <label>LGALS9C</label>
    </interactant>
    <organismsDiffer>false</organismsDiffer>
    <experiments>3</experiments>
</comment>
<comment type="interaction">
    <interactant intactId="EBI-6875961">
        <id>P02489</id>
    </interactant>
    <interactant intactId="EBI-749562">
        <id>Q96JB6</id>
        <label>LOXL4</label>
    </interactant>
    <organismsDiffer>false</organismsDiffer>
    <experiments>3</experiments>
</comment>
<comment type="interaction">
    <interactant intactId="EBI-6875961">
        <id>P02489</id>
    </interactant>
    <interactant intactId="EBI-476263">
        <id>Q99683</id>
        <label>MAP3K5</label>
    </interactant>
    <organismsDiffer>false</organismsDiffer>
    <experiments>3</experiments>
</comment>
<comment type="interaction">
    <interactant intactId="EBI-6875961">
        <id>P02489</id>
    </interactant>
    <interactant intactId="EBI-298304">
        <id>Q15759</id>
        <label>MAPK11</label>
    </interactant>
    <organismsDiffer>false</organismsDiffer>
    <experiments>3</experiments>
</comment>
<comment type="interaction">
    <interactant intactId="EBI-6875961">
        <id>P02489</id>
    </interactant>
    <interactant intactId="EBI-1053295">
        <id>Q8N6R0</id>
        <label>METTL13</label>
    </interactant>
    <organismsDiffer>false</organismsDiffer>
    <experiments>3</experiments>
</comment>
<comment type="interaction">
    <interactant intactId="EBI-6875961">
        <id>P02489</id>
    </interactant>
    <interactant intactId="EBI-10279647">
        <id>Q92886</id>
        <label>NEUROG1</label>
    </interactant>
    <organismsDiffer>false</organismsDiffer>
    <experiments>3</experiments>
</comment>
<comment type="interaction">
    <interactant intactId="EBI-6875961">
        <id>P02489</id>
    </interactant>
    <interactant intactId="EBI-1051262">
        <id>Q9Y239</id>
        <label>NOD1</label>
    </interactant>
    <organismsDiffer>false</organismsDiffer>
    <experiments>3</experiments>
</comment>
<comment type="interaction">
    <interactant intactId="EBI-6875961">
        <id>P02489</id>
    </interactant>
    <interactant intactId="EBI-741158">
        <id>Q96HA8</id>
        <label>NTAQ1</label>
    </interactant>
    <organismsDiffer>false</organismsDiffer>
    <experiments>7</experiments>
</comment>
<comment type="interaction">
    <interactant intactId="EBI-6875961">
        <id>P02489</id>
    </interactant>
    <interactant intactId="EBI-357298">
        <id>Q9Y266</id>
        <label>NUDC</label>
    </interactant>
    <organismsDiffer>false</organismsDiffer>
    <experiments>3</experiments>
</comment>
<comment type="interaction">
    <interactant intactId="EBI-6875961">
        <id>P02489</id>
    </interactant>
    <interactant intactId="EBI-9091052">
        <id>Q6P4D5-2</id>
        <label>PABIR3</label>
    </interactant>
    <organismsDiffer>false</organismsDiffer>
    <experiments>3</experiments>
</comment>
<comment type="interaction">
    <interactant intactId="EBI-6875961">
        <id>P02489</id>
    </interactant>
    <interactant intactId="EBI-17242559">
        <id>Q495U3</id>
        <label>PANX2</label>
    </interactant>
    <organismsDiffer>false</organismsDiffer>
    <experiments>3</experiments>
</comment>
<comment type="interaction">
    <interactant intactId="EBI-6875961">
        <id>P02489</id>
    </interactant>
    <interactant intactId="EBI-1055079">
        <id>O15160</id>
        <label>POLR1C</label>
    </interactant>
    <organismsDiffer>false</organismsDiffer>
    <experiments>3</experiments>
</comment>
<comment type="interaction">
    <interactant intactId="EBI-6875961">
        <id>P02489</id>
    </interactant>
    <interactant intactId="EBI-395189">
        <id>P19388</id>
        <label>POLR2E</label>
    </interactant>
    <organismsDiffer>false</organismsDiffer>
    <experiments>3</experiments>
</comment>
<comment type="interaction">
    <interactant intactId="EBI-6875961">
        <id>P02489</id>
    </interactant>
    <interactant intactId="EBI-25835994">
        <id>Q6ZMI0-5</id>
        <label>PPP1R21</label>
    </interactant>
    <organismsDiffer>false</organismsDiffer>
    <experiments>3</experiments>
</comment>
<comment type="interaction">
    <interactant intactId="EBI-6875961">
        <id>P02489</id>
    </interactant>
    <interactant intactId="EBI-2860740">
        <id>Q96QH2</id>
        <label>PRAM1</label>
    </interactant>
    <organismsDiffer>false</organismsDiffer>
    <experiments>3</experiments>
</comment>
<comment type="interaction">
    <interactant intactId="EBI-6875961">
        <id>P02489</id>
    </interactant>
    <interactant intactId="EBI-752074">
        <id>P41219</id>
        <label>PRPH</label>
    </interactant>
    <organismsDiffer>false</organismsDiffer>
    <experiments>3</experiments>
</comment>
<comment type="interaction">
    <interactant intactId="EBI-6875961">
        <id>P02489</id>
    </interactant>
    <interactant intactId="EBI-749195">
        <id>P60891</id>
        <label>PRPS1</label>
    </interactant>
    <organismsDiffer>false</organismsDiffer>
    <experiments>3</experiments>
</comment>
<comment type="interaction">
    <interactant intactId="EBI-6875961">
        <id>P02489</id>
    </interactant>
    <interactant intactId="EBI-355546">
        <id>P61289</id>
        <label>PSME3</label>
    </interactant>
    <organismsDiffer>false</organismsDiffer>
    <experiments>3</experiments>
</comment>
<comment type="interaction">
    <interactant intactId="EBI-6875961">
        <id>P02489</id>
    </interactant>
    <interactant intactId="EBI-3906138">
        <id>P53801</id>
        <label>PTTG1IP</label>
    </interactant>
    <organismsDiffer>false</organismsDiffer>
    <experiments>3</experiments>
</comment>
<comment type="interaction">
    <interactant intactId="EBI-6875961">
        <id>P02489</id>
    </interactant>
    <interactant intactId="EBI-12123390">
        <id>Q9NWB1-5</id>
        <label>RBFOX1</label>
    </interactant>
    <organismsDiffer>false</organismsDiffer>
    <experiments>3</experiments>
</comment>
<comment type="interaction">
    <interactant intactId="EBI-6875961">
        <id>P02489</id>
    </interactant>
    <interactant intactId="EBI-2856454">
        <id>Q9BWF3</id>
        <label>RBM4</label>
    </interactant>
    <organismsDiffer>false</organismsDiffer>
    <experiments>3</experiments>
</comment>
<comment type="interaction">
    <interactant intactId="EBI-6875961">
        <id>P02489</id>
    </interactant>
    <interactant intactId="EBI-25839575">
        <id>Q8WZ73-3</id>
        <label>RFFL</label>
    </interactant>
    <organismsDiffer>false</organismsDiffer>
    <experiments>3</experiments>
</comment>
<comment type="interaction">
    <interactant intactId="EBI-6875961">
        <id>P02489</id>
    </interactant>
    <interactant intactId="EBI-25834767">
        <id>P47804-3</id>
        <label>RGR</label>
    </interactant>
    <organismsDiffer>false</organismsDiffer>
    <experiments>3</experiments>
</comment>
<comment type="interaction">
    <interactant intactId="EBI-6875961">
        <id>P02489</id>
    </interactant>
    <interactant intactId="EBI-6285694">
        <id>Q9H4E5</id>
        <label>RHOJ</label>
    </interactant>
    <organismsDiffer>false</organismsDiffer>
    <experiments>3</experiments>
</comment>
<comment type="interaction">
    <interactant intactId="EBI-6875961">
        <id>P02489</id>
    </interactant>
    <interactant intactId="EBI-2340642">
        <id>Q969K3</id>
        <label>RNF34</label>
    </interactant>
    <organismsDiffer>false</organismsDiffer>
    <experiments>3</experiments>
</comment>
<comment type="interaction">
    <interactant intactId="EBI-6875961">
        <id>P02489</id>
    </interactant>
    <interactant intactId="EBI-354112">
        <id>P08865</id>
        <label>RPSA</label>
    </interactant>
    <organismsDiffer>false</organismsDiffer>
    <experiments>3</experiments>
</comment>
<comment type="interaction">
    <interactant intactId="EBI-6875961">
        <id>P02489</id>
    </interactant>
    <interactant intactId="EBI-712405">
        <id>P48443</id>
        <label>RXRG</label>
    </interactant>
    <organismsDiffer>false</organismsDiffer>
    <experiments>3</experiments>
</comment>
<comment type="interaction">
    <interactant intactId="EBI-6875961">
        <id>P02489</id>
    </interactant>
    <interactant intactId="EBI-752324">
        <id>Q8N488</id>
        <label>RYBP</label>
    </interactant>
    <organismsDiffer>false</organismsDiffer>
    <experiments>3</experiments>
</comment>
<comment type="interaction">
    <interactant intactId="EBI-6875961">
        <id>P02489</id>
    </interactant>
    <interactant intactId="EBI-25837959">
        <id>Q9BY12-3</id>
        <label>SCAPER</label>
    </interactant>
    <organismsDiffer>false</organismsDiffer>
    <experiments>3</experiments>
</comment>
<comment type="interaction">
    <interactant intactId="EBI-6875961">
        <id>P02489</id>
    </interactant>
    <interactant intactId="EBI-727004">
        <id>O00560</id>
        <label>SDCBP</label>
    </interactant>
    <organismsDiffer>false</organismsDiffer>
    <experiments>7</experiments>
</comment>
<comment type="interaction">
    <interactant intactId="EBI-6875961">
        <id>P02489</id>
    </interactant>
    <interactant intactId="EBI-10696955">
        <id>Q86SQ7-2</id>
        <label>SDCCAG8</label>
    </interactant>
    <organismsDiffer>false</organismsDiffer>
    <experiments>3</experiments>
</comment>
<comment type="interaction">
    <interactant intactId="EBI-6875961">
        <id>P02489</id>
    </interactant>
    <interactant intactId="EBI-9089805">
        <id>Q9NTN9-3</id>
        <label>SEMA4G</label>
    </interactant>
    <organismsDiffer>false</organismsDiffer>
    <experiments>3</experiments>
</comment>
<comment type="interaction">
    <interactant intactId="EBI-6875961">
        <id>P02489</id>
    </interactant>
    <interactant intactId="EBI-10182463">
        <id>Q2NKQ1-4</id>
        <label>SGSM1</label>
    </interactant>
    <organismsDiffer>false</organismsDiffer>
    <experiments>3</experiments>
</comment>
<comment type="interaction">
    <interactant intactId="EBI-6875961">
        <id>P02489</id>
    </interactant>
    <interactant intactId="EBI-750105">
        <id>Q5T0L3</id>
        <label>SPATA46</label>
    </interactant>
    <organismsDiffer>false</organismsDiffer>
    <experiments>3</experiments>
</comment>
<comment type="interaction">
    <interactant intactId="EBI-6875961">
        <id>P02489</id>
    </interactant>
    <interactant intactId="EBI-3923692">
        <id>Q496A3</id>
        <label>SPATS1</label>
    </interactant>
    <organismsDiffer>false</organismsDiffer>
    <experiments>3</experiments>
</comment>
<comment type="interaction">
    <interactant intactId="EBI-6875961">
        <id>P02489</id>
    </interactant>
    <interactant intactId="EBI-742688">
        <id>Q9NZD8</id>
        <label>SPG21</label>
    </interactant>
    <organismsDiffer>false</organismsDiffer>
    <experiments>7</experiments>
</comment>
<comment type="interaction">
    <interactant intactId="EBI-6875961">
        <id>P02489</id>
    </interactant>
    <interactant intactId="EBI-354861">
        <id>Q9C004</id>
        <label>SPRY4</label>
    </interactant>
    <organismsDiffer>false</organismsDiffer>
    <experiments>3</experiments>
</comment>
<comment type="interaction">
    <interactant intactId="EBI-6875961">
        <id>P02489</id>
    </interactant>
    <interactant intactId="EBI-2659201">
        <id>Q96BD6</id>
        <label>SPSB1</label>
    </interactant>
    <organismsDiffer>false</organismsDiffer>
    <experiments>3</experiments>
</comment>
<comment type="interaction">
    <interactant intactId="EBI-6875961">
        <id>P02489</id>
    </interactant>
    <interactant intactId="EBI-714135">
        <id>O75558</id>
        <label>STX11</label>
    </interactant>
    <organismsDiffer>false</organismsDiffer>
    <experiments>3</experiments>
</comment>
<comment type="interaction">
    <interactant intactId="EBI-6875961">
        <id>P02489</id>
    </interactant>
    <interactant intactId="EBI-11123832">
        <id>O60506-4</id>
        <label>SYNCRIP</label>
    </interactant>
    <organismsDiffer>false</organismsDiffer>
    <experiments>3</experiments>
</comment>
<comment type="interaction">
    <interactant intactId="EBI-6875961">
        <id>P02489</id>
    </interactant>
    <interactant intactId="EBI-954089">
        <id>O15273</id>
        <label>TCAP</label>
    </interactant>
    <organismsDiffer>false</organismsDiffer>
    <experiments>3</experiments>
</comment>
<comment type="interaction">
    <interactant intactId="EBI-6875961">
        <id>P02489</id>
    </interactant>
    <interactant intactId="EBI-3923210">
        <id>Q8TDR4</id>
        <label>TCP10L</label>
    </interactant>
    <organismsDiffer>false</organismsDiffer>
    <experiments>3</experiments>
</comment>
<comment type="interaction">
    <interactant intactId="EBI-6875961">
        <id>P02489</id>
    </interactant>
    <interactant intactId="EBI-752030">
        <id>Q96A09</id>
        <label>TENT5B</label>
    </interactant>
    <organismsDiffer>false</organismsDiffer>
    <experiments>3</experiments>
</comment>
<comment type="interaction">
    <interactant intactId="EBI-6875961">
        <id>P02489</id>
    </interactant>
    <interactant intactId="EBI-12090309">
        <id>Q9BXU0</id>
        <label>TEX12</label>
    </interactant>
    <organismsDiffer>false</organismsDiffer>
    <experiments>3</experiments>
</comment>
<comment type="interaction">
    <interactant intactId="EBI-6875961">
        <id>P02489</id>
    </interactant>
    <interactant intactId="EBI-2372529">
        <id>O60830</id>
        <label>TIMM17B</label>
    </interactant>
    <organismsDiffer>false</organismsDiffer>
    <experiments>3</experiments>
</comment>
<comment type="interaction">
    <interactant intactId="EBI-6875961">
        <id>P02489</id>
    </interactant>
    <interactant intactId="EBI-25839648">
        <id>Q8IU80-2</id>
        <label>TMPRSS6</label>
    </interactant>
    <organismsDiffer>false</organismsDiffer>
    <experiments>3</experiments>
</comment>
<comment type="interaction">
    <interactant intactId="EBI-6875961">
        <id>P02489</id>
    </interactant>
    <interactant intactId="EBI-9089156">
        <id>Q8IUR5-4</id>
        <label>TMTC1</label>
    </interactant>
    <organismsDiffer>false</organismsDiffer>
    <experiments>3</experiments>
</comment>
<comment type="interaction">
    <interactant intactId="EBI-6875961">
        <id>P02489</id>
    </interactant>
    <interactant intactId="EBI-2509913">
        <id>Q96KP6</id>
        <label>TNIP3</label>
    </interactant>
    <organismsDiffer>false</organismsDiffer>
    <experiments>3</experiments>
</comment>
<comment type="interaction">
    <interactant intactId="EBI-6875961">
        <id>P02489</id>
    </interactant>
    <interactant intactId="EBI-740411">
        <id>Q96A04</id>
        <label>TSACC</label>
    </interactant>
    <organismsDiffer>false</organismsDiffer>
    <experiments>3</experiments>
</comment>
<comment type="interaction">
    <interactant intactId="EBI-6875961">
        <id>P02489</id>
    </interactant>
    <interactant intactId="EBI-3914288">
        <id>O60636</id>
        <label>TSPAN2</label>
    </interactant>
    <organismsDiffer>false</organismsDiffer>
    <experiments>3</experiments>
</comment>
<comment type="interaction">
    <interactant intactId="EBI-6875961">
        <id>P02489</id>
    </interactant>
    <interactant intactId="EBI-9088812">
        <id>Q5VYS8-5</id>
        <label>TUT7</label>
    </interactant>
    <organismsDiffer>false</organismsDiffer>
    <experiments>3</experiments>
</comment>
<comment type="interaction">
    <interactant intactId="EBI-6875961">
        <id>P02489</id>
    </interactant>
    <interactant intactId="EBI-1050671">
        <id>Q13404</id>
        <label>UBE2V1</label>
    </interactant>
    <organismsDiffer>false</organismsDiffer>
    <experiments>3</experiments>
</comment>
<comment type="interaction">
    <interactant intactId="EBI-6875961">
        <id>P02489</id>
    </interactant>
    <interactant intactId="EBI-12817837">
        <id>Q9H9P5-5</id>
        <label>UNKL</label>
    </interactant>
    <organismsDiffer>false</organismsDiffer>
    <experiments>3</experiments>
</comment>
<comment type="interaction">
    <interactant intactId="EBI-6875961">
        <id>P02489</id>
    </interactant>
    <interactant intactId="EBI-11911675">
        <id>Q9NVA1</id>
        <label>UQCC1</label>
    </interactant>
    <organismsDiffer>false</organismsDiffer>
    <experiments>3</experiments>
</comment>
<comment type="interaction">
    <interactant intactId="EBI-6875961">
        <id>P02489</id>
    </interactant>
    <interactant intactId="EBI-10316321">
        <id>Q9NX94</id>
        <label>WBP1L</label>
    </interactant>
    <organismsDiffer>false</organismsDiffer>
    <experiments>3</experiments>
</comment>
<comment type="interaction">
    <interactant intactId="EBI-6875961">
        <id>P02489</id>
    </interactant>
    <interactant intactId="EBI-12040603">
        <id>Q9NZC7-5</id>
        <label>WWOX</label>
    </interactant>
    <organismsDiffer>false</organismsDiffer>
    <experiments>3</experiments>
</comment>
<comment type="interaction">
    <interactant intactId="EBI-6875961">
        <id>P02489</id>
    </interactant>
    <interactant intactId="EBI-25830993">
        <id>Q96EF9</id>
        <label>ZHX1-C8orf76</label>
    </interactant>
    <organismsDiffer>false</organismsDiffer>
    <experiments>3</experiments>
</comment>
<comment type="interaction">
    <interactant intactId="EBI-6875961">
        <id>P02489</id>
    </interactant>
    <interactant intactId="EBI-8834821">
        <id>Q8WUU4</id>
        <label>ZNF296</label>
    </interactant>
    <organismsDiffer>false</organismsDiffer>
    <experiments>3</experiments>
</comment>
<comment type="interaction">
    <interactant intactId="EBI-6875961">
        <id>P02489</id>
    </interactant>
    <interactant intactId="EBI-12010736">
        <id>Q8N0Y2-2</id>
        <label>ZNF444</label>
    </interactant>
    <organismsDiffer>false</organismsDiffer>
    <experiments>3</experiments>
</comment>
<comment type="interaction">
    <interactant intactId="EBI-6875961">
        <id>P02489</id>
    </interactant>
    <interactant intactId="EBI-9088990">
        <id>Q7Z783</id>
    </interactant>
    <organismsDiffer>false</organismsDiffer>
    <experiments>3</experiments>
</comment>
<comment type="subcellular location">
    <subcellularLocation>
        <location evidence="8 24 25 41 48">Cytoplasm</location>
    </subcellularLocation>
    <subcellularLocation>
        <location evidence="24">Nucleus</location>
    </subcellularLocation>
    <text>Translocates to the nucleus during heat shock and resides in sub-nuclear structures known as SC35 speckles or nuclear splicing speckles.</text>
</comment>
<comment type="tissue specificity">
    <text evidence="7 35">Expressed in the eye lens (at protein level).</text>
</comment>
<comment type="PTM">
    <text>O-glycosylated; contains N-acetylglucosamine side chains.</text>
</comment>
<comment type="PTM">
    <text evidence="21 53 56 58 59">Deamidation of Asn-101 in lens occurs mostly during the first 30 years of age, followed by a small additional amount of deamidation (approximately 5%) during the next approximately 38 years, resulting in a maximum of approximately 50% deamidation during the lifetime of the individual.</text>
</comment>
<comment type="PTM">
    <text evidence="4 53 55 56 59">Phosphorylation on Ser-122 seems to be developmentally regulated. Absent in the first months of life, it appears during the first 12 years of human lifetime. The relative amount of phosphorylated form versus unphosphorylated form does not change over the lifetime of the individual.</text>
</comment>
<comment type="PTM">
    <text evidence="32 54 59">Acetylation at Lys-70 may increase chaperone activity.</text>
</comment>
<comment type="PTM">
    <text evidence="4 7 53 56 59">Undergoes age-dependent proteolytical cleavage at the C-terminus. Alpha-crystallin A(1-172) is the most predominant form produced most rapidly during the first 12 years of age and after this age is present in approximately 50% of the lens molecules.</text>
</comment>
<comment type="PTM">
    <text evidence="62">In young individuals and during the first approximately 30 years of life, less than half molecules contain an intramolecular disulfide bond (oxidized form), while in the remaining fraction the cysteines are in the free sulfhydryl form (reduced form). With aging, the amount of oxidized form increases up to 90% and it becomes a major constituent of high molecular weight aggregates, concomitant with an age-dependent loss of its chaperone activity. The reduced form is undetectable in cataractous lenses.</text>
</comment>
<comment type="mass spectrometry" mass="19950.0" method="Electrospray" evidence="53">
    <molecule>Alpha-crystallin A chain</molecule>
</comment>
<comment type="mass spectrometry" mass="19863.0" method="Electrospray" evidence="53">
    <molecule>Alpha-crystallin A(1-172)</molecule>
</comment>
<comment type="mass spectrometry" mass="20029.0" method="Electrospray" evidence="53">
    <molecule>Alpha-crystallin A chain</molecule>
    <text>With 1 phosphate group.</text>
</comment>
<comment type="mass spectrometry" mass="19951.0" method="Electrospray" evidence="59">
    <molecule>Alpha-crystallin A chain</molecule>
</comment>
<comment type="mass spectrometry" mass="19864.0" method="Electrospray" evidence="59">
    <molecule>Alpha-crystallin A(1-172)</molecule>
</comment>
<comment type="mass spectrometry" mass="19947.0" method="Electrospray" evidence="4">
    <molecule>Alpha-crystallin A chain</molecule>
</comment>
<comment type="mass spectrometry" mass="19851.0" method="Electrospray" evidence="4">
    <molecule>Alpha-crystallin A(1-172)</molecule>
</comment>
<comment type="disease">
    <text evidence="7">Alpha-crystallin A 1-172 is found at nearly twofold higher levels in diabetic lenses than in age-matched control lenses.</text>
</comment>
<comment type="disease" evidence="5 6 8 9 10 11 13 14 16 17 18 19 20 22 23 25 26 27 29 30 31 33 35 36 37 38 39 40 41 42 43 44 46 47 48 49 51 52 57">
    <disease id="DI-01200">
        <name>Cataract 9, multiple types</name>
        <acronym>CTRCT9</acronym>
        <description>An opacification of the crystalline lens of the eye that frequently results in visual impairment or blindness. Opacities vary in morphology, are often confined to a portion of the lens, and may be static or progressive. In general, the more posteriorly located and dense an opacity, the greater the impact on visual function. CTRCT9 includes nuclear, zonular central nuclear, anterior polar, cortical, embryonal, anterior subcapsular, fan-shaped, and total cataracts, among others. In some cases cataract is associated with microcornea without any other systemic anomaly or dysmorphism. Microcornea is defined by a corneal diameter inferior to 10 mm in both meridians in an otherwise normal eye.</description>
        <dbReference type="MIM" id="604219"/>
    </disease>
    <text>The disease is caused by variants affecting the gene represented in this entry.</text>
</comment>
<comment type="similarity">
    <text evidence="3">Belongs to the small heat shock protein (HSP20) family.</text>
</comment>
<evidence type="ECO:0000250" key="1"/>
<evidence type="ECO:0000250" key="2">
    <source>
        <dbReference type="UniProtKB" id="P02470"/>
    </source>
</evidence>
<evidence type="ECO:0000255" key="3">
    <source>
        <dbReference type="PROSITE-ProRule" id="PRU00285"/>
    </source>
</evidence>
<evidence type="ECO:0000269" key="4">
    <source>
    </source>
</evidence>
<evidence type="ECO:0000269" key="5">
    <source>
    </source>
</evidence>
<evidence type="ECO:0000269" key="6">
    <source>
    </source>
</evidence>
<evidence type="ECO:0000269" key="7">
    <source>
    </source>
</evidence>
<evidence type="ECO:0000269" key="8">
    <source>
    </source>
</evidence>
<evidence type="ECO:0000269" key="9">
    <source>
    </source>
</evidence>
<evidence type="ECO:0000269" key="10">
    <source>
    </source>
</evidence>
<evidence type="ECO:0000269" key="11">
    <source>
    </source>
</evidence>
<evidence type="ECO:0000269" key="12">
    <source>
    </source>
</evidence>
<evidence type="ECO:0000269" key="13">
    <source>
    </source>
</evidence>
<evidence type="ECO:0000269" key="14">
    <source>
    </source>
</evidence>
<evidence type="ECO:0000269" key="15">
    <source>
    </source>
</evidence>
<evidence type="ECO:0000269" key="16">
    <source>
    </source>
</evidence>
<evidence type="ECO:0000269" key="17">
    <source>
    </source>
</evidence>
<evidence type="ECO:0000269" key="18">
    <source>
    </source>
</evidence>
<evidence type="ECO:0000269" key="19">
    <source>
    </source>
</evidence>
<evidence type="ECO:0000269" key="20">
    <source>
    </source>
</evidence>
<evidence type="ECO:0000269" key="21">
    <source>
    </source>
</evidence>
<evidence type="ECO:0000269" key="22">
    <source>
    </source>
</evidence>
<evidence type="ECO:0000269" key="23">
    <source>
    </source>
</evidence>
<evidence type="ECO:0000269" key="24">
    <source>
    </source>
</evidence>
<evidence type="ECO:0000269" key="25">
    <source>
    </source>
</evidence>
<evidence type="ECO:0000269" key="26">
    <source>
    </source>
</evidence>
<evidence type="ECO:0000269" key="27">
    <source>
    </source>
</evidence>
<evidence type="ECO:0000269" key="28">
    <source>
    </source>
</evidence>
<evidence type="ECO:0000269" key="29">
    <source>
    </source>
</evidence>
<evidence type="ECO:0000269" key="30">
    <source>
    </source>
</evidence>
<evidence type="ECO:0000269" key="31">
    <source>
    </source>
</evidence>
<evidence type="ECO:0000269" key="32">
    <source>
    </source>
</evidence>
<evidence type="ECO:0000269" key="33">
    <source>
    </source>
</evidence>
<evidence type="ECO:0000269" key="34">
    <source>
    </source>
</evidence>
<evidence type="ECO:0000269" key="35">
    <source>
    </source>
</evidence>
<evidence type="ECO:0000269" key="36">
    <source>
    </source>
</evidence>
<evidence type="ECO:0000269" key="37">
    <source>
    </source>
</evidence>
<evidence type="ECO:0000269" key="38">
    <source>
    </source>
</evidence>
<evidence type="ECO:0000269" key="39">
    <source>
    </source>
</evidence>
<evidence type="ECO:0000269" key="40">
    <source>
    </source>
</evidence>
<evidence type="ECO:0000269" key="41">
    <source>
    </source>
</evidence>
<evidence type="ECO:0000269" key="42">
    <source>
    </source>
</evidence>
<evidence type="ECO:0000269" key="43">
    <source>
    </source>
</evidence>
<evidence type="ECO:0000269" key="44">
    <source>
    </source>
</evidence>
<evidence type="ECO:0000269" key="45">
    <source>
    </source>
</evidence>
<evidence type="ECO:0000269" key="46">
    <source>
    </source>
</evidence>
<evidence type="ECO:0000269" key="47">
    <source>
    </source>
</evidence>
<evidence type="ECO:0000269" key="48">
    <source>
    </source>
</evidence>
<evidence type="ECO:0000269" key="49">
    <source>
    </source>
</evidence>
<evidence type="ECO:0000269" key="50">
    <source>
    </source>
</evidence>
<evidence type="ECO:0000269" key="51">
    <source>
    </source>
</evidence>
<evidence type="ECO:0000269" key="52">
    <source>
    </source>
</evidence>
<evidence type="ECO:0000269" key="53">
    <source>
    </source>
</evidence>
<evidence type="ECO:0000269" key="54">
    <source>
    </source>
</evidence>
<evidence type="ECO:0000269" key="55">
    <source>
    </source>
</evidence>
<evidence type="ECO:0000269" key="56">
    <source>
    </source>
</evidence>
<evidence type="ECO:0000269" key="57">
    <source>
    </source>
</evidence>
<evidence type="ECO:0000269" key="58">
    <source>
    </source>
</evidence>
<evidence type="ECO:0000269" key="59">
    <source>
    </source>
</evidence>
<evidence type="ECO:0000303" key="60">
    <source>
    </source>
</evidence>
<evidence type="ECO:0000305" key="61"/>
<evidence type="ECO:0000305" key="62">
    <source>
    </source>
</evidence>
<evidence type="ECO:0007744" key="63">
    <source>
        <dbReference type="PDB" id="6T1R"/>
    </source>
</evidence>
<dbReference type="EMBL" id="U05569">
    <property type="protein sequence ID" value="AAA97523.1"/>
    <property type="molecule type" value="mRNA"/>
</dbReference>
<dbReference type="EMBL" id="U66584">
    <property type="protein sequence ID" value="AAC50900.1"/>
    <property type="molecule type" value="mRNA"/>
</dbReference>
<dbReference type="EMBL" id="X14789">
    <property type="protein sequence ID" value="CAA32891.1"/>
    <property type="molecule type" value="mRNA"/>
</dbReference>
<dbReference type="EMBL" id="KM220588">
    <property type="protein sequence ID" value="AMM63583.1"/>
    <property type="molecule type" value="mRNA"/>
</dbReference>
<dbReference type="EMBL" id="KM220592">
    <property type="protein sequence ID" value="AMM63587.1"/>
    <property type="molecule type" value="mRNA"/>
</dbReference>
<dbReference type="EMBL" id="KM220591">
    <property type="protein sequence ID" value="AMM63586.1"/>
    <property type="molecule type" value="mRNA"/>
</dbReference>
<dbReference type="EMBL" id="KM220590">
    <property type="protein sequence ID" value="AMM63585.1"/>
    <property type="molecule type" value="mRNA"/>
</dbReference>
<dbReference type="EMBL" id="KM220589">
    <property type="protein sequence ID" value="AMM63584.1"/>
    <property type="molecule type" value="mRNA"/>
</dbReference>
<dbReference type="EMBL" id="CR407691">
    <property type="protein sequence ID" value="CAG28619.1"/>
    <property type="molecule type" value="mRNA"/>
</dbReference>
<dbReference type="EMBL" id="AP001631">
    <property type="status" value="NOT_ANNOTATED_CDS"/>
    <property type="molecule type" value="Genomic_DNA"/>
</dbReference>
<dbReference type="EMBL" id="AP001748">
    <property type="protein sequence ID" value="BAA95535.1"/>
    <property type="molecule type" value="Genomic_DNA"/>
</dbReference>
<dbReference type="EMBL" id="CH471079">
    <property type="protein sequence ID" value="EAX09497.1"/>
    <property type="molecule type" value="Genomic_DNA"/>
</dbReference>
<dbReference type="EMBL" id="CH471079">
    <property type="protein sequence ID" value="EAX09498.1"/>
    <property type="molecule type" value="Genomic_DNA"/>
</dbReference>
<dbReference type="EMBL" id="BC069528">
    <property type="protein sequence ID" value="AAH69528.1"/>
    <property type="molecule type" value="mRNA"/>
</dbReference>
<dbReference type="EMBL" id="BC113598">
    <property type="protein sequence ID" value="AAI13599.1"/>
    <property type="molecule type" value="mRNA"/>
</dbReference>
<dbReference type="EMBL" id="M35628">
    <property type="protein sequence ID" value="AAA52106.1"/>
    <property type="molecule type" value="Genomic_DNA"/>
</dbReference>
<dbReference type="EMBL" id="M35629">
    <property type="protein sequence ID" value="AAA52105.1"/>
    <property type="molecule type" value="Genomic_DNA"/>
</dbReference>
<dbReference type="CCDS" id="CCDS13695.1"/>
<dbReference type="PIR" id="S03344">
    <property type="entry name" value="CYHUAA"/>
</dbReference>
<dbReference type="RefSeq" id="NP_000385.1">
    <property type="nucleotide sequence ID" value="NM_000394.4"/>
</dbReference>
<dbReference type="RefSeq" id="NP_001300979.1">
    <property type="nucleotide sequence ID" value="NM_001314050.2"/>
</dbReference>
<dbReference type="PDB" id="6T1R">
    <property type="method" value="EM"/>
    <property type="resolution" value="9.80 A"/>
    <property type="chains" value="A/B/C/D/E/F/G/H/I/J/K/L/M/N/O/P=1-173"/>
</dbReference>
<dbReference type="PDBsum" id="6T1R"/>
<dbReference type="EMDB" id="EMD-4894"/>
<dbReference type="EMDB" id="EMD-4895"/>
<dbReference type="EMDB" id="EMD-4896"/>
<dbReference type="SMR" id="P02489"/>
<dbReference type="BioGRID" id="107799">
    <property type="interactions" value="193"/>
</dbReference>
<dbReference type="BioGRID" id="3195755">
    <property type="interactions" value="7"/>
</dbReference>
<dbReference type="DIP" id="DIP-41265N"/>
<dbReference type="FunCoup" id="P02489">
    <property type="interactions" value="212"/>
</dbReference>
<dbReference type="IntAct" id="P02489">
    <property type="interactions" value="160"/>
</dbReference>
<dbReference type="MINT" id="P02489"/>
<dbReference type="STRING" id="9606.ENSP00000291554"/>
<dbReference type="BindingDB" id="P02489"/>
<dbReference type="ChEMBL" id="CHEMBL4296283"/>
<dbReference type="MoonDB" id="P02489">
    <property type="type" value="Curated"/>
</dbReference>
<dbReference type="TCDB" id="8.A.172.1.2">
    <property type="family name" value="the Alpha-crystallin chaperone (crya) family"/>
</dbReference>
<dbReference type="GlyConnect" id="33">
    <property type="glycosylation" value="1 O-GlcNAc glycan"/>
</dbReference>
<dbReference type="GlyCosmos" id="P02489">
    <property type="glycosylation" value="1 site, 1 glycan"/>
</dbReference>
<dbReference type="GlyGen" id="P02489">
    <property type="glycosylation" value="2 sites, 1 O-linked glycan (1 site)"/>
</dbReference>
<dbReference type="iPTMnet" id="P02489"/>
<dbReference type="PhosphoSitePlus" id="P02489"/>
<dbReference type="BioMuta" id="CRYAA"/>
<dbReference type="DMDM" id="1706112"/>
<dbReference type="MassIVE" id="P02489"/>
<dbReference type="PaxDb" id="9606-ENSP00000291554"/>
<dbReference type="PeptideAtlas" id="P02489"/>
<dbReference type="PRIDE" id="P02489"/>
<dbReference type="ProteomicsDB" id="20516"/>
<dbReference type="ProteomicsDB" id="51526"/>
<dbReference type="Antibodypedia" id="23982">
    <property type="antibodies" value="451 antibodies from 31 providers"/>
</dbReference>
<dbReference type="Antibodypedia" id="78327">
    <property type="antibodies" value="2 antibodies from 1 providers"/>
</dbReference>
<dbReference type="DNASU" id="1409"/>
<dbReference type="Ensembl" id="ENST00000291554.6">
    <property type="protein sequence ID" value="ENSP00000291554.2"/>
    <property type="gene ID" value="ENSG00000160202.8"/>
</dbReference>
<dbReference type="GeneID" id="102724652"/>
<dbReference type="GeneID" id="1409"/>
<dbReference type="KEGG" id="hsa:102724652"/>
<dbReference type="KEGG" id="hsa:1409"/>
<dbReference type="MANE-Select" id="ENST00000291554.6">
    <property type="protein sequence ID" value="ENSP00000291554.2"/>
    <property type="RefSeq nucleotide sequence ID" value="NM_000394.4"/>
    <property type="RefSeq protein sequence ID" value="NP_000385.1"/>
</dbReference>
<dbReference type="UCSC" id="uc002zdd.3">
    <property type="organism name" value="human"/>
</dbReference>
<dbReference type="UCSC" id="uc061ywn.1">
    <property type="organism name" value="human"/>
</dbReference>
<dbReference type="AGR" id="HGNC:2388"/>
<dbReference type="CTD" id="1409"/>
<dbReference type="DisGeNET" id="102724652"/>
<dbReference type="DisGeNET" id="1409"/>
<dbReference type="GeneCards" id="CRYAA"/>
<dbReference type="HGNC" id="HGNC:2388">
    <property type="gene designation" value="CRYAA"/>
</dbReference>
<dbReference type="HPA" id="ENSG00000160202">
    <property type="expression patterns" value="Group enriched (kidney, retina)"/>
</dbReference>
<dbReference type="MalaCards" id="CRYAA"/>
<dbReference type="MIM" id="123580">
    <property type="type" value="gene"/>
</dbReference>
<dbReference type="MIM" id="604219">
    <property type="type" value="phenotype"/>
</dbReference>
<dbReference type="neXtProt" id="NX_P02489"/>
<dbReference type="OpenTargets" id="ENSG00000160202"/>
<dbReference type="Orphanet" id="1377">
    <property type="disease" value="Cataract-microcornea syndrome"/>
</dbReference>
<dbReference type="Orphanet" id="98988">
    <property type="disease" value="Early-onset anterior polar cataract"/>
</dbReference>
<dbReference type="Orphanet" id="441452">
    <property type="disease" value="Early-onset lamellar cataract"/>
</dbReference>
<dbReference type="Orphanet" id="98991">
    <property type="disease" value="Early-onset nuclear cataract"/>
</dbReference>
<dbReference type="Orphanet" id="98994">
    <property type="disease" value="Total early-onset cataract"/>
</dbReference>
<dbReference type="PharmGKB" id="PA26906"/>
<dbReference type="VEuPathDB" id="HostDB:ENSG00000160202"/>
<dbReference type="VEuPathDB" id="HostDB:ENSG00000276076"/>
<dbReference type="eggNOG" id="KOG3591">
    <property type="taxonomic scope" value="Eukaryota"/>
</dbReference>
<dbReference type="GeneTree" id="ENSGT00940000160159"/>
<dbReference type="HOGENOM" id="CLU_095001_2_0_1"/>
<dbReference type="InParanoid" id="P02489"/>
<dbReference type="OMA" id="TEGHKQK"/>
<dbReference type="OrthoDB" id="1431247at2759"/>
<dbReference type="PAN-GO" id="P02489">
    <property type="GO annotations" value="7 GO annotations based on evolutionary models"/>
</dbReference>
<dbReference type="PhylomeDB" id="P02489"/>
<dbReference type="TreeFam" id="TF105049"/>
<dbReference type="PathwayCommons" id="P02489"/>
<dbReference type="SignaLink" id="P02489"/>
<dbReference type="SIGNOR" id="P02489"/>
<dbReference type="BioGRID-ORCS" id="102724652">
    <property type="hits" value="0 hits in 4 CRISPR screens"/>
</dbReference>
<dbReference type="BioGRID-ORCS" id="1409">
    <property type="hits" value="9 hits in 1139 CRISPR screens"/>
</dbReference>
<dbReference type="CD-CODE" id="DEE660B4">
    <property type="entry name" value="Stress granule"/>
</dbReference>
<dbReference type="GeneWiki" id="CRYAA"/>
<dbReference type="Pharos" id="P02489">
    <property type="development level" value="Tchem"/>
</dbReference>
<dbReference type="PRO" id="PR:P02489"/>
<dbReference type="Proteomes" id="UP000005640">
    <property type="component" value="Chromosome 21"/>
</dbReference>
<dbReference type="RNAct" id="P02489">
    <property type="molecule type" value="protein"/>
</dbReference>
<dbReference type="Bgee" id="ENSG00000160202">
    <property type="expression patterns" value="Expressed in adult mammalian kidney and 31 other cell types or tissues"/>
</dbReference>
<dbReference type="ExpressionAtlas" id="P02489">
    <property type="expression patterns" value="baseline and differential"/>
</dbReference>
<dbReference type="GO" id="GO:0005737">
    <property type="term" value="C:cytoplasm"/>
    <property type="evidence" value="ECO:0000314"/>
    <property type="project" value="UniProtKB"/>
</dbReference>
<dbReference type="GO" id="GO:0005829">
    <property type="term" value="C:cytosol"/>
    <property type="evidence" value="ECO:0000314"/>
    <property type="project" value="HPA"/>
</dbReference>
<dbReference type="GO" id="GO:0005654">
    <property type="term" value="C:nucleoplasm"/>
    <property type="evidence" value="ECO:0000314"/>
    <property type="project" value="HPA"/>
</dbReference>
<dbReference type="GO" id="GO:0005634">
    <property type="term" value="C:nucleus"/>
    <property type="evidence" value="ECO:0000314"/>
    <property type="project" value="UniProtKB"/>
</dbReference>
<dbReference type="GO" id="GO:0032991">
    <property type="term" value="C:protein-containing complex"/>
    <property type="evidence" value="ECO:0000314"/>
    <property type="project" value="UniProtKB"/>
</dbReference>
<dbReference type="GO" id="GO:0042802">
    <property type="term" value="F:identical protein binding"/>
    <property type="evidence" value="ECO:0000353"/>
    <property type="project" value="UniProtKB"/>
</dbReference>
<dbReference type="GO" id="GO:0046872">
    <property type="term" value="F:metal ion binding"/>
    <property type="evidence" value="ECO:0007669"/>
    <property type="project" value="UniProtKB-KW"/>
</dbReference>
<dbReference type="GO" id="GO:0005212">
    <property type="term" value="F:structural constituent of eye lens"/>
    <property type="evidence" value="ECO:0007669"/>
    <property type="project" value="UniProtKB-KW"/>
</dbReference>
<dbReference type="GO" id="GO:0005198">
    <property type="term" value="F:structural molecule activity"/>
    <property type="evidence" value="ECO:0000314"/>
    <property type="project" value="UniProtKB"/>
</dbReference>
<dbReference type="GO" id="GO:0051082">
    <property type="term" value="F:unfolded protein binding"/>
    <property type="evidence" value="ECO:0000315"/>
    <property type="project" value="UniProtKB"/>
</dbReference>
<dbReference type="GO" id="GO:0007015">
    <property type="term" value="P:actin filament organization"/>
    <property type="evidence" value="ECO:0007669"/>
    <property type="project" value="Ensembl"/>
</dbReference>
<dbReference type="GO" id="GO:0060561">
    <property type="term" value="P:apoptotic process involved in morphogenesis"/>
    <property type="evidence" value="ECO:0007669"/>
    <property type="project" value="Ensembl"/>
</dbReference>
<dbReference type="GO" id="GO:0048596">
    <property type="term" value="P:embryonic camera-type eye morphogenesis"/>
    <property type="evidence" value="ECO:0007669"/>
    <property type="project" value="Ensembl"/>
</dbReference>
<dbReference type="GO" id="GO:0002088">
    <property type="term" value="P:lens development in camera-type eye"/>
    <property type="evidence" value="ECO:0000318"/>
    <property type="project" value="GO_Central"/>
</dbReference>
<dbReference type="GO" id="GO:0070309">
    <property type="term" value="P:lens fiber cell morphogenesis"/>
    <property type="evidence" value="ECO:0007669"/>
    <property type="project" value="Ensembl"/>
</dbReference>
<dbReference type="GO" id="GO:0007017">
    <property type="term" value="P:microtubule-based process"/>
    <property type="evidence" value="ECO:0007669"/>
    <property type="project" value="Ensembl"/>
</dbReference>
<dbReference type="GO" id="GO:0007005">
    <property type="term" value="P:mitochondrion organization"/>
    <property type="evidence" value="ECO:0007669"/>
    <property type="project" value="Ensembl"/>
</dbReference>
<dbReference type="GO" id="GO:0043066">
    <property type="term" value="P:negative regulation of apoptotic process"/>
    <property type="evidence" value="ECO:0000314"/>
    <property type="project" value="HGNC-UCL"/>
</dbReference>
<dbReference type="GO" id="GO:0010629">
    <property type="term" value="P:negative regulation of gene expression"/>
    <property type="evidence" value="ECO:0007669"/>
    <property type="project" value="Ensembl"/>
</dbReference>
<dbReference type="GO" id="GO:0032387">
    <property type="term" value="P:negative regulation of intracellular transport"/>
    <property type="evidence" value="ECO:0000314"/>
    <property type="project" value="HGNC-UCL"/>
</dbReference>
<dbReference type="GO" id="GO:0030307">
    <property type="term" value="P:positive regulation of cell growth"/>
    <property type="evidence" value="ECO:0007669"/>
    <property type="project" value="Ensembl"/>
</dbReference>
<dbReference type="GO" id="GO:0042026">
    <property type="term" value="P:protein refolding"/>
    <property type="evidence" value="ECO:0000318"/>
    <property type="project" value="GO_Central"/>
</dbReference>
<dbReference type="GO" id="GO:0050821">
    <property type="term" value="P:protein stabilization"/>
    <property type="evidence" value="ECO:0000315"/>
    <property type="project" value="CAFA"/>
</dbReference>
<dbReference type="GO" id="GO:0009408">
    <property type="term" value="P:response to heat"/>
    <property type="evidence" value="ECO:0000318"/>
    <property type="project" value="GO_Central"/>
</dbReference>
<dbReference type="GO" id="GO:0042542">
    <property type="term" value="P:response to hydrogen peroxide"/>
    <property type="evidence" value="ECO:0007669"/>
    <property type="project" value="Ensembl"/>
</dbReference>
<dbReference type="GO" id="GO:0001666">
    <property type="term" value="P:response to hypoxia"/>
    <property type="evidence" value="ECO:0007669"/>
    <property type="project" value="Ensembl"/>
</dbReference>
<dbReference type="GO" id="GO:0070141">
    <property type="term" value="P:response to UV-A"/>
    <property type="evidence" value="ECO:0007669"/>
    <property type="project" value="Ensembl"/>
</dbReference>
<dbReference type="GO" id="GO:0007021">
    <property type="term" value="P:tubulin complex assembly"/>
    <property type="evidence" value="ECO:0007669"/>
    <property type="project" value="Ensembl"/>
</dbReference>
<dbReference type="GO" id="GO:0007601">
    <property type="term" value="P:visual perception"/>
    <property type="evidence" value="ECO:0000315"/>
    <property type="project" value="UniProtKB"/>
</dbReference>
<dbReference type="CDD" id="cd06497">
    <property type="entry name" value="ACD_alphaA-crystallin_HspB4"/>
    <property type="match status" value="1"/>
</dbReference>
<dbReference type="FunFam" id="2.60.40.790:FF:000008">
    <property type="entry name" value="Alpha-crystallin A chain"/>
    <property type="match status" value="1"/>
</dbReference>
<dbReference type="Gene3D" id="2.60.40.790">
    <property type="match status" value="1"/>
</dbReference>
<dbReference type="InterPro" id="IPR002068">
    <property type="entry name" value="A-crystallin/Hsp20_dom"/>
</dbReference>
<dbReference type="InterPro" id="IPR055269">
    <property type="entry name" value="Alpha-crystallin/HSP_16"/>
</dbReference>
<dbReference type="InterPro" id="IPR001436">
    <property type="entry name" value="Alpha-crystallin/sHSP_animal"/>
</dbReference>
<dbReference type="InterPro" id="IPR003090">
    <property type="entry name" value="Alpha-crystallin_N"/>
</dbReference>
<dbReference type="InterPro" id="IPR008978">
    <property type="entry name" value="HSP20-like_chaperone"/>
</dbReference>
<dbReference type="PANTHER" id="PTHR45640:SF14">
    <property type="entry name" value="ALPHA-CRYSTALLIN A CHAIN"/>
    <property type="match status" value="1"/>
</dbReference>
<dbReference type="PANTHER" id="PTHR45640">
    <property type="entry name" value="HEAT SHOCK PROTEIN HSP-12.2-RELATED"/>
    <property type="match status" value="1"/>
</dbReference>
<dbReference type="Pfam" id="PF00525">
    <property type="entry name" value="Crystallin"/>
    <property type="match status" value="1"/>
</dbReference>
<dbReference type="Pfam" id="PF00011">
    <property type="entry name" value="HSP20"/>
    <property type="match status" value="1"/>
</dbReference>
<dbReference type="PIRSF" id="PIRSF036514">
    <property type="entry name" value="Sm_HSP_B1"/>
    <property type="match status" value="1"/>
</dbReference>
<dbReference type="PRINTS" id="PR00299">
    <property type="entry name" value="ACRYSTALLIN"/>
</dbReference>
<dbReference type="SUPFAM" id="SSF49764">
    <property type="entry name" value="HSP20-like chaperones"/>
    <property type="match status" value="1"/>
</dbReference>
<dbReference type="PROSITE" id="PS01031">
    <property type="entry name" value="SHSP"/>
    <property type="match status" value="1"/>
</dbReference>
<proteinExistence type="evidence at protein level"/>
<sequence length="173" mass="19909">MDVTIQHPWFKRTLGPFYPSRLFDQFFGEGLFEYDLLPFLSSTISPYYRQSLFRTVLDSGISEVRSDRDKFVIFLDVKHFSPEDLTVKVQDDFVEIHGKHNERQDDHGYISREFHRRYRLPSNVDQSALSCSLSADGMLTFCGPKIQTGLDATHAERAIPVSREEKPTSAPSS</sequence>
<name>CRYAA_HUMAN</name>
<keyword id="KW-0002">3D-structure</keyword>
<keyword id="KW-0007">Acetylation</keyword>
<keyword id="KW-0898">Cataract</keyword>
<keyword id="KW-0143">Chaperone</keyword>
<keyword id="KW-0963">Cytoplasm</keyword>
<keyword id="KW-0903">Direct protein sequencing</keyword>
<keyword id="KW-0225">Disease variant</keyword>
<keyword id="KW-1015">Disulfide bond</keyword>
<keyword id="KW-0273">Eye lens protein</keyword>
<keyword id="KW-0325">Glycoprotein</keyword>
<keyword id="KW-0479">Metal-binding</keyword>
<keyword id="KW-0539">Nucleus</keyword>
<keyword id="KW-0558">Oxidation</keyword>
<keyword id="KW-0597">Phosphoprotein</keyword>
<keyword id="KW-1267">Proteomics identification</keyword>
<keyword id="KW-1185">Reference proteome</keyword>
<keyword id="KW-0716">Sensory transduction</keyword>
<keyword id="KW-0844">Vision</keyword>
<keyword id="KW-0862">Zinc</keyword>
<gene>
    <name type="primary">CRYAA</name>
    <name type="synonym">CRYA1</name>
    <name type="synonym">HSPB4</name>
</gene>
<reference key="1">
    <citation type="journal article" date="1975" name="FEBS Lett.">
        <title>The amino acid sequence of the A chain of human alpha-crystallin.</title>
        <authorList>
            <person name="de Jong W.W."/>
            <person name="Terwindt E.C."/>
            <person name="Bloemendal H."/>
        </authorList>
    </citation>
    <scope>PRELIMINARY PROTEIN SEQUENCE</scope>
    <scope>ACETYLATION AT MET-1</scope>
</reference>
<reference key="2">
    <citation type="journal article" date="1995" name="J. Mol. Evol.">
        <title>A reassessment of mammalian alpha A-crystallin sequences using DNA sequencing: implications for anthropoid affinities of tarsier.</title>
        <authorList>
            <person name="Jaworski C.J."/>
        </authorList>
    </citation>
    <scope>NUCLEOTIDE SEQUENCE [MRNA]</scope>
    <source>
        <tissue>Lens</tissue>
    </source>
</reference>
<reference key="3">
    <citation type="journal article" date="1996" name="J. Biol. Chem.">
        <title>Cloning, expression, and chaperone-like activity of human alphaA-crystallin.</title>
        <authorList>
            <person name="Andley U.P."/>
            <person name="Mathur S."/>
            <person name="Griest T.A."/>
            <person name="Petrash J.M."/>
        </authorList>
    </citation>
    <scope>NUCLEOTIDE SEQUENCE [MRNA]</scope>
    <source>
        <tissue>Lens</tissue>
    </source>
</reference>
<reference key="4">
    <citation type="submission" date="2014-07" db="EMBL/GenBank/DDBJ databases">
        <title>Functional candidate gene approach to study genetic polymorphisms in lens specific genes.</title>
        <authorList>
            <person name="Rajkumar S."/>
        </authorList>
    </citation>
    <scope>NUCLEOTIDE SEQUENCE [MRNA]</scope>
    <source>
        <tissue>Lens</tissue>
    </source>
</reference>
<reference key="5">
    <citation type="submission" date="2004-05" db="EMBL/GenBank/DDBJ databases">
        <title>Cloning of human full open reading frames in Gateway(TM) system entry vector (pDONR201).</title>
        <authorList>
            <person name="Ebert L."/>
            <person name="Schick M."/>
            <person name="Neubert P."/>
            <person name="Schatten R."/>
            <person name="Henze S."/>
            <person name="Korn B."/>
        </authorList>
    </citation>
    <scope>NUCLEOTIDE SEQUENCE [LARGE SCALE MRNA]</scope>
</reference>
<reference key="6">
    <citation type="journal article" date="2000" name="Nature">
        <title>The DNA sequence of human chromosome 21.</title>
        <authorList>
            <person name="Hattori M."/>
            <person name="Fujiyama A."/>
            <person name="Taylor T.D."/>
            <person name="Watanabe H."/>
            <person name="Yada T."/>
            <person name="Park H.-S."/>
            <person name="Toyoda A."/>
            <person name="Ishii K."/>
            <person name="Totoki Y."/>
            <person name="Choi D.-K."/>
            <person name="Groner Y."/>
            <person name="Soeda E."/>
            <person name="Ohki M."/>
            <person name="Takagi T."/>
            <person name="Sakaki Y."/>
            <person name="Taudien S."/>
            <person name="Blechschmidt K."/>
            <person name="Polley A."/>
            <person name="Menzel U."/>
            <person name="Delabar J."/>
            <person name="Kumpf K."/>
            <person name="Lehmann R."/>
            <person name="Patterson D."/>
            <person name="Reichwald K."/>
            <person name="Rump A."/>
            <person name="Schillhabel M."/>
            <person name="Schudy A."/>
            <person name="Zimmermann W."/>
            <person name="Rosenthal A."/>
            <person name="Kudoh J."/>
            <person name="Shibuya K."/>
            <person name="Kawasaki K."/>
            <person name="Asakawa S."/>
            <person name="Shintani A."/>
            <person name="Sasaki T."/>
            <person name="Nagamine K."/>
            <person name="Mitsuyama S."/>
            <person name="Antonarakis S.E."/>
            <person name="Minoshima S."/>
            <person name="Shimizu N."/>
            <person name="Nordsiek G."/>
            <person name="Hornischer K."/>
            <person name="Brandt P."/>
            <person name="Scharfe M."/>
            <person name="Schoen O."/>
            <person name="Desario A."/>
            <person name="Reichelt J."/>
            <person name="Kauer G."/>
            <person name="Bloecker H."/>
            <person name="Ramser J."/>
            <person name="Beck A."/>
            <person name="Klages S."/>
            <person name="Hennig S."/>
            <person name="Riesselmann L."/>
            <person name="Dagand E."/>
            <person name="Wehrmeyer S."/>
            <person name="Borzym K."/>
            <person name="Gardiner K."/>
            <person name="Nizetic D."/>
            <person name="Francis F."/>
            <person name="Lehrach H."/>
            <person name="Reinhardt R."/>
            <person name="Yaspo M.-L."/>
        </authorList>
    </citation>
    <scope>NUCLEOTIDE SEQUENCE [LARGE SCALE GENOMIC DNA]</scope>
</reference>
<reference key="7">
    <citation type="submission" date="2005-09" db="EMBL/GenBank/DDBJ databases">
        <authorList>
            <person name="Mural R.J."/>
            <person name="Istrail S."/>
            <person name="Sutton G."/>
            <person name="Florea L."/>
            <person name="Halpern A.L."/>
            <person name="Mobarry C.M."/>
            <person name="Lippert R."/>
            <person name="Walenz B."/>
            <person name="Shatkay H."/>
            <person name="Dew I."/>
            <person name="Miller J.R."/>
            <person name="Flanigan M.J."/>
            <person name="Edwards N.J."/>
            <person name="Bolanos R."/>
            <person name="Fasulo D."/>
            <person name="Halldorsson B.V."/>
            <person name="Hannenhalli S."/>
            <person name="Turner R."/>
            <person name="Yooseph S."/>
            <person name="Lu F."/>
            <person name="Nusskern D.R."/>
            <person name="Shue B.C."/>
            <person name="Zheng X.H."/>
            <person name="Zhong F."/>
            <person name="Delcher A.L."/>
            <person name="Huson D.H."/>
            <person name="Kravitz S.A."/>
            <person name="Mouchard L."/>
            <person name="Reinert K."/>
            <person name="Remington K.A."/>
            <person name="Clark A.G."/>
            <person name="Waterman M.S."/>
            <person name="Eichler E.E."/>
            <person name="Adams M.D."/>
            <person name="Hunkapiller M.W."/>
            <person name="Myers E.W."/>
            <person name="Venter J.C."/>
        </authorList>
    </citation>
    <scope>NUCLEOTIDE SEQUENCE [LARGE SCALE GENOMIC DNA]</scope>
</reference>
<reference key="8">
    <citation type="journal article" date="2004" name="Genome Res.">
        <title>The status, quality, and expansion of the NIH full-length cDNA project: the Mammalian Gene Collection (MGC).</title>
        <authorList>
            <consortium name="The MGC Project Team"/>
        </authorList>
    </citation>
    <scope>NUCLEOTIDE SEQUENCE [LARGE SCALE MRNA]</scope>
    <source>
        <tissue>Colon</tissue>
    </source>
</reference>
<reference key="9">
    <citation type="journal article" date="1989" name="Nature">
        <title>A pseudo-exon in the functional human alpha A-crystallin gene.</title>
        <authorList>
            <person name="Jaworski C.J."/>
            <person name="Piatigorsky J."/>
        </authorList>
    </citation>
    <scope>NUCLEOTIDE SEQUENCE [GENOMIC DNA] OF 1-104</scope>
</reference>
<reference key="10">
    <citation type="journal article" date="1986" name="Exp. Eye Res.">
        <title>Isolation and partial characterization of the human alpha A-crystallin gene.</title>
        <authorList>
            <person name="McDevitt D.S."/>
            <person name="Hawkins J.W."/>
            <person name="Jaworski C.J."/>
            <person name="Piatigorsky J."/>
        </authorList>
    </citation>
    <scope>NUCLEOTIDE SEQUENCE [GENOMIC DNA] OF 1-63 AND 166-173</scope>
    <source>
        <tissue>Spleen</tissue>
    </source>
</reference>
<reference key="11">
    <citation type="journal article" date="1997" name="J. Biol. Chem.">
        <title>Sequence analysis of betaA3, betaB3, and betaA4 crystallins completes the identification of the major proteins in young human lens.</title>
        <authorList>
            <person name="Lampi K.J."/>
            <person name="Ma Z."/>
            <person name="Shih M."/>
            <person name="Shearer T.R."/>
            <person name="Smith J.B."/>
            <person name="Smith D.L."/>
            <person name="David L.L."/>
        </authorList>
    </citation>
    <scope>PROTEIN SEQUENCE OF 13-21 AND 79-88</scope>
</reference>
<reference key="12">
    <citation type="journal article" date="1992" name="J. Biol. Chem.">
        <title>Vertebrate lens alpha-crystallins are modified by O-linked N-acetylglucosamine.</title>
        <authorList>
            <person name="Roquemore E.P."/>
            <person name="Dell A."/>
            <person name="Morris H.R."/>
            <person name="Panico M."/>
            <person name="Reason A.J."/>
            <person name="Savoy L.-A."/>
            <person name="Wistow G.J."/>
            <person name="Zigler J.S. Jr."/>
            <person name="Earles B.J."/>
            <person name="Hart G.W."/>
        </authorList>
    </citation>
    <scope>STRUCTURE OF CARBOHYDRATE</scope>
</reference>
<reference key="13">
    <citation type="journal article" date="1994" name="J. Biol. Chem.">
        <title>Post-translational modifications of water-soluble human lens crystallins from young adults.</title>
        <authorList>
            <person name="Miesbauer L.R."/>
            <person name="Zhou X."/>
            <person name="Yang Z."/>
            <person name="Yang Z."/>
            <person name="Sun Y."/>
            <person name="Smith D.L."/>
            <person name="Smith J.B."/>
        </authorList>
    </citation>
    <scope>PHOSPHORYLATION AT SER-122</scope>
    <scope>DISULFIDE BOND</scope>
    <scope>PROTEOLYTIC PROCESSING OF C-TERMINAL</scope>
    <scope>DEAMIDATION AT ASN-101</scope>
    <scope>MASS SPECTROMETRY</scope>
</reference>
<reference key="14">
    <citation type="journal article" date="1996" name="Exp. Eye Res.">
        <title>Differential phosphorylation of alpha-A crystallin in human lens of different age.</title>
        <authorList>
            <person name="Takemoto L.J."/>
        </authorList>
    </citation>
    <scope>PHOSPHORYLATION AT SER-122</scope>
</reference>
<reference key="15">
    <citation type="journal article" date="1996" name="Exp. Eye Res.">
        <title>Modifications of the water-insoluble human lens alpha-crystallins.</title>
        <authorList>
            <person name="Lund A.L."/>
            <person name="Smith J.B."/>
            <person name="Smith D.L."/>
        </authorList>
    </citation>
    <scope>PROTEOLYTIC PROCESSING</scope>
    <scope>SUSCEPTIBILITY TO OXIDATION</scope>
    <scope>PHOSPHORYLATION AT SER-45 AND SER-122</scope>
    <scope>DISULFIDE BOND</scope>
    <scope>DEAMIDATION AT GLN-6; GLN-50; GLN-90; ASN-101 AND GLN-147</scope>
    <scope>IDENTIFICATION BY MASS SPECTROMETRY</scope>
</reference>
<reference key="16">
    <citation type="journal article" date="1998" name="Curr. Eye Res.">
        <title>Quantitation of asparagine-101 deamidation from alpha-A crystallin during aging of the human lens.</title>
        <authorList>
            <person name="Takemoto L.J."/>
        </authorList>
    </citation>
    <scope>DEAMIDATION AT ASN-101</scope>
</reference>
<reference key="17">
    <citation type="journal article" date="1998" name="Protein Sci.">
        <title>In vivo acetylation identified at lysine 70 of human lens alphaA-crystallin.</title>
        <authorList>
            <person name="Lin P.P."/>
            <person name="Barry R.C."/>
            <person name="Smith D.L."/>
            <person name="Smith J.B."/>
        </authorList>
    </citation>
    <scope>PROTEOLYTIC PROCESSING OF C-TERMINAL</scope>
    <scope>ACETYLATION AT LYS-70</scope>
    <scope>PHOSPHORYLATION</scope>
    <scope>DEAMIDATION AT ASN-101</scope>
    <scope>MASS SPECTROMETRY</scope>
</reference>
<reference key="18">
    <citation type="journal article" date="2000" name="Exp. Eye Res.">
        <title>The major in vivo modifications of the human water-insoluble lens crystallins are disulfide bonds, deamidation, methionine oxidation and backbone cleavage.</title>
        <authorList>
            <person name="Hanson S.R.A."/>
            <person name="Hasan A."/>
            <person name="Smith D.L."/>
            <person name="Smith J.B."/>
        </authorList>
    </citation>
    <scope>PHOSPHORYLATION</scope>
    <scope>SUSCEPTIBILITY TO OXIDATION</scope>
    <scope>PROTEOLYTIC PROCESSING OF C-TERMINAL</scope>
    <scope>MASS SPECTROMETRY</scope>
</reference>
<reference key="19">
    <citation type="journal article" date="2001" name="Curr. Protein Pept. Sci.">
        <title>Chaperone-like activity of alpha-crystallin and other small heat shock proteins.</title>
        <authorList>
            <person name="Ganea E."/>
        </authorList>
    </citation>
    <scope>REVIEW</scope>
</reference>
<reference key="20">
    <citation type="journal article" date="2002" name="Invest. Ophthalmol. Vis. Sci.">
        <title>Enhanced C-terminal truncation of alphaA- and alphaB-crystallins in diabetic lenses.</title>
        <authorList>
            <person name="Thampi P."/>
            <person name="Hassan A."/>
            <person name="Smith J.B."/>
            <person name="Abraham E.C."/>
        </authorList>
    </citation>
    <scope>PROTEOLYTIC PROCESSING</scope>
    <scope>TISSUE SPECIFICITY</scope>
</reference>
<reference key="21">
    <citation type="journal article" date="2008" name="Biochemistry">
        <title>Structural and functional roles of deamidation and/or truncation of N- or C-termini in human alpha A-crystallin.</title>
        <authorList>
            <person name="Chaves J.M."/>
            <person name="Srivastava K."/>
            <person name="Gupta R."/>
            <person name="Srivastava O.P."/>
        </authorList>
    </citation>
    <scope>DEAMIDATION AT ASN-123</scope>
    <scope>MUTAGENESIS OF ASN-123</scope>
</reference>
<reference key="22">
    <citation type="journal article" date="2008" name="Mol. Cell. Biochem.">
        <title>C-Terminal truncation affects subunit exchange of human alphaA-crystallin with alphaB-crystallin.</title>
        <authorList>
            <person name="Kallur L.S."/>
            <person name="Aziz A."/>
            <person name="Abraham E.C."/>
        </authorList>
    </citation>
    <scope>SUBUNIT</scope>
</reference>
<reference key="23">
    <citation type="journal article" date="2009" name="Biochim. Biophys. Acta">
        <title>HSPB7 is a SC35 speckle resident small heat shock protein.</title>
        <authorList>
            <person name="Vos M.J."/>
            <person name="Kanon B."/>
            <person name="Kampinga H.H."/>
        </authorList>
    </citation>
    <scope>SUBCELLULAR LOCATION</scope>
</reference>
<reference key="24">
    <citation type="journal article" date="2010" name="IUBMB Life">
        <title>Importance of eye lens alpha-crystallin heteropolymer with 3:1 alphaA to alphaB ratio: stability, aggregation, and modifications.</title>
        <authorList>
            <person name="Srinivas P."/>
            <person name="Narahari A."/>
            <person name="Petrash J.M."/>
            <person name="Swamy M.J."/>
            <person name="Reddy G.B."/>
        </authorList>
    </citation>
    <scope>SUBUNIT</scope>
</reference>
<reference key="25">
    <citation type="journal article" date="2012" name="Biochim. Biophys. Acta">
        <title>Acetylation of alphaA-crystallin in the human lens: effects on structure and chaperone function.</title>
        <authorList>
            <person name="Nagaraj R.H."/>
            <person name="Nahomi R.B."/>
            <person name="Shanthakumar S."/>
            <person name="Linetsky M."/>
            <person name="Padmanabha S."/>
            <person name="Pasupuleti N."/>
            <person name="Wang B."/>
            <person name="Santhoshkumar P."/>
            <person name="Panda A.K."/>
            <person name="Biswas A."/>
        </authorList>
    </citation>
    <scope>FUNCTION</scope>
    <scope>ACETYLATION AT LYS-70 AND LYS-99</scope>
</reference>
<reference key="26">
    <citation type="journal article" date="2012" name="Protein J.">
        <title>Identification of histidine residues involved in Zn(2+) binding to alphaA- and alphaB-Crystallin by chemical modification and MALDI TOF mass spectrometry.</title>
        <authorList>
            <person name="Karmakar S."/>
            <person name="Das K.P."/>
        </authorList>
    </citation>
    <scope>SUBUNIT</scope>
    <scope>ZINC-BINDING SITES</scope>
</reference>
<reference key="27">
    <citation type="journal article" date="2017" name="Biochem. Biophys. Res. Commun.">
        <title>Human alpha A-crystallin missing N-terminal domain poorly complexes with filensin and phakinin.</title>
        <authorList>
            <person name="Chaves J.M."/>
            <person name="Gupta R."/>
            <person name="Srivastava K."/>
            <person name="Srivastava O."/>
        </authorList>
    </citation>
    <scope>FUNCTION</scope>
    <scope>IDENTIFICATION IN A COMPLEX WITH BFSP1 AND BFSP2</scope>
</reference>
<reference evidence="63" key="28">
    <citation type="journal article" date="2019" name="Nat. Struct. Mol. Biol.">
        <title>The structure and oxidation of the eye lens chaperone alphaA-crystallin.</title>
        <authorList>
            <person name="Kaiser C.J.O."/>
            <person name="Peters C."/>
            <person name="Schmid P.W.N."/>
            <person name="Stavropoulou M."/>
            <person name="Zou J."/>
            <person name="Dahiya V."/>
            <person name="Mymrikov E.V."/>
            <person name="Rockel B."/>
            <person name="Asami S."/>
            <person name="Haslbeck M."/>
            <person name="Rappsilber J."/>
            <person name="Reif B."/>
            <person name="Zacharias M."/>
            <person name="Buchner J."/>
            <person name="Weinkauf S."/>
        </authorList>
    </citation>
    <scope>STRUCTURE BY ELECTRON MICROSCOPY (9.80 ANGSTROMS)</scope>
    <scope>HOMOMERIZATION</scope>
    <scope>DISULFIDE BOND</scope>
    <scope>FUNCTION</scope>
</reference>
<reference key="29">
    <citation type="journal article" date="1998" name="Hum. Mol. Genet.">
        <title>Autosomal dominant congenital cataract associated with a missense mutation in the human alpha crystallin gene CRYAA.</title>
        <authorList>
            <person name="Litt M."/>
            <person name="Kramer P."/>
            <person name="la Morticella D.M."/>
            <person name="Murphey W."/>
            <person name="Lovrien E.W."/>
            <person name="Weleber R.G."/>
        </authorList>
    </citation>
    <scope>VARIANT CTRCT9 CYS-116</scope>
</reference>
<reference key="30">
    <citation type="journal article" date="2000" name="Biochemistry">
        <title>Structural and functional changes in the alpha A-crystallin R116C mutant in hereditary cataracts.</title>
        <authorList>
            <person name="Cobb B.A."/>
            <person name="Petrash J.M."/>
        </authorList>
    </citation>
    <scope>CHARACTERIZATION OF VARIANT CTRCT9 CYS-116</scope>
</reference>
<reference key="31">
    <citation type="journal article" date="2000" name="Invest. Ophthalmol. Vis. Sci.">
        <title>A nonsense mutation (W9X) in CRYAA causes autosomal recessive cataract in an inbred Jewish Persian family.</title>
        <authorList>
            <person name="Pras E."/>
            <person name="Frydman M."/>
            <person name="Levy-Nissenbaum E."/>
            <person name="Bakhan T."/>
            <person name="Raz J."/>
            <person name="Assia E.I."/>
            <person name="Goldman B."/>
            <person name="Pras E."/>
        </authorList>
    </citation>
    <scope>VARIANT CTRCT9 9-TRP--SER-173 DEL</scope>
</reference>
<reference key="32">
    <citation type="journal article" date="2003" name="Eur. J. Hum. Genet.">
        <title>Cell death triggered by a novel mutation in the alphaA-crystallin gene underlies autosomal dominant cataract linked to chromosome 21q.</title>
        <authorList>
            <person name="Mackay D.S."/>
            <person name="Andley U.P."/>
            <person name="Shiels A."/>
        </authorList>
    </citation>
    <scope>VARIANT CTRCT9 CYS-49</scope>
    <scope>SUBCELLULAR LOCATION</scope>
</reference>
<reference key="33">
    <citation type="journal article" date="2006" name="Graefes Arch. Clin. Exp. Ophthalmol.">
        <title>Congenital cataract and macular hypoplasia in humans associated with a de novo mutation in CRYAA and compound heterozygous mutations in P.</title>
        <authorList>
            <person name="Graw J."/>
            <person name="Klopp N."/>
            <person name="Illig T."/>
            <person name="Preising M.N."/>
            <person name="Lorenz B."/>
        </authorList>
    </citation>
    <scope>VARIANT CTRCT9 LEU-21</scope>
</reference>
<reference key="34">
    <citation type="journal article" date="2006" name="Mol. Vis.">
        <title>A novel fan-shaped cataract-microcornea syndrome caused by a mutation of CRYAA in an Indian family.</title>
        <authorList>
            <person name="Vanita V."/>
            <person name="Singh J.R."/>
            <person name="Hejtmancik J.F."/>
            <person name="Nuernberg P."/>
            <person name="Hennies H.C."/>
            <person name="Singh D."/>
            <person name="Sperling K."/>
        </authorList>
    </citation>
    <scope>VARIANT CTRCT9 CYS-116</scope>
</reference>
<reference key="35">
    <citation type="journal article" date="2006" name="Mol. Vis.">
        <title>Identification of a novel, putative cataract-causing allele in CRYAA (G98R) in an Indian family.</title>
        <authorList>
            <person name="Santhiya S.T."/>
            <person name="Soker T."/>
            <person name="Klopp N."/>
            <person name="Illig T."/>
            <person name="Prakash M.V."/>
            <person name="Selvaraj B."/>
            <person name="Gopinath P.M."/>
            <person name="Graw J."/>
        </authorList>
    </citation>
    <scope>VARIANT CTRCT9 ARG-98</scope>
</reference>
<reference key="36">
    <citation type="journal article" date="2006" name="Science">
        <title>The consensus coding sequences of human breast and colorectal cancers.</title>
        <authorList>
            <person name="Sjoeblom T."/>
            <person name="Jones S."/>
            <person name="Wood L.D."/>
            <person name="Parsons D.W."/>
            <person name="Lin J."/>
            <person name="Barber T.D."/>
            <person name="Mandelker D."/>
            <person name="Leary R.J."/>
            <person name="Ptak J."/>
            <person name="Silliman N."/>
            <person name="Szabo S."/>
            <person name="Buckhaults P."/>
            <person name="Farrell C."/>
            <person name="Meeh P."/>
            <person name="Markowitz S.D."/>
            <person name="Willis J."/>
            <person name="Dawson D."/>
            <person name="Willson J.K.V."/>
            <person name="Gazdar A.F."/>
            <person name="Hartigan J."/>
            <person name="Wu L."/>
            <person name="Liu C."/>
            <person name="Parmigiani G."/>
            <person name="Park B.H."/>
            <person name="Bachman K.E."/>
            <person name="Papadopoulos N."/>
            <person name="Vogelstein B."/>
            <person name="Kinzler K.W."/>
            <person name="Velculescu V.E."/>
        </authorList>
    </citation>
    <scope>VARIANT [LARGE SCALE ANALYSIS] HIS-105</scope>
</reference>
<reference key="37">
    <citation type="journal article" date="2007" name="Am. J. Ophthalmol.">
        <title>Recessive congenital total cataract with microcornea and heterozygote carrier signs caused by a novel missense CRYAA mutation (R54C).</title>
        <authorList>
            <person name="Khan A.O."/>
            <person name="Aldahmesh M.A."/>
            <person name="Meyer B."/>
        </authorList>
    </citation>
    <scope>VARIANT CTRCT9 CYS-54</scope>
</reference>
<reference key="38">
    <citation type="journal article" date="2007" name="Arch. Ophthalmol.">
        <title>New phenotype associated with an Arg116Cys mutation in the CRYAA gene: nuclear cataract, iris coloboma, and microphthalmia.</title>
        <authorList>
            <person name="Beby F."/>
            <person name="Commeaux C."/>
            <person name="Bozon M."/>
            <person name="Denis P."/>
            <person name="Edery P."/>
            <person name="Morle L."/>
        </authorList>
    </citation>
    <scope>VARIANT CTRCT9 CYS-116</scope>
</reference>
<reference key="39">
    <citation type="journal article" date="2007" name="Invest. Ophthalmol. Vis. Sci.">
        <title>Genetic heterogeneity in microcornea-cataract: five novel mutations in CRYAA, CRYGD, and GJA8.</title>
        <authorList>
            <person name="Hansen L."/>
            <person name="Yao W."/>
            <person name="Eiberg H."/>
            <person name="Kjaer K.W."/>
            <person name="Baggesen K."/>
            <person name="Hejtmancik J.F."/>
            <person name="Rosenberg T."/>
        </authorList>
    </citation>
    <scope>VARIANTS CTRCT9 CYS-12 AND TRP-21</scope>
</reference>
<reference key="40">
    <citation type="journal article" date="2007" name="Mol. Vis.">
        <title>Cataract-causing alphaAG98R mutant shows substrate-dependent chaperone activity.</title>
        <authorList>
            <person name="Murugesan R."/>
            <person name="Santhoshkumar P."/>
            <person name="Sharma K.K."/>
        </authorList>
    </citation>
    <scope>CHARACTERIZATION OF VARIANT CTRCT9 ARG-98</scope>
    <scope>FUNCTION</scope>
</reference>
<reference key="41">
    <citation type="journal article" date="2008" name="Am. J. Med. Genet. A">
        <title>Clinical variability of autosomal dominant cataract, microcornea and corneal opacity and novel mutation in the alpha A crystallin gene (CRYAA).</title>
        <authorList>
            <person name="Richter L."/>
            <person name="Flodman P."/>
            <person name="Barria von-Bischhoffshausen F."/>
            <person name="Burch D."/>
            <person name="Brown S."/>
            <person name="Nguyen L."/>
            <person name="Turner J."/>
            <person name="Spence M.A."/>
            <person name="Bateman J.B."/>
        </authorList>
    </citation>
    <scope>FUNCTION</scope>
    <scope>VARIANT CTRCT9 HIS-116</scope>
</reference>
<reference key="42">
    <citation type="journal article" date="2008" name="Hum. Mutat.">
        <title>A novel mutation in AlphaA-crystallin (CRYAA) caused autosomal dominant congenital cataract in a large Chinese family.</title>
        <authorList>
            <person name="Gu F."/>
            <person name="Luo W."/>
            <person name="Li X."/>
            <person name="Wang Z."/>
            <person name="Lu S."/>
            <person name="Zhang M."/>
            <person name="Zhao B."/>
            <person name="Zhu S."/>
            <person name="Feng S."/>
            <person name="Yan Y.-B."/>
            <person name="Huang S."/>
            <person name="Ma X."/>
        </authorList>
    </citation>
    <scope>VARIANT CTRCT9 HIS-116</scope>
    <scope>CHARACTERIZATION OF VARIANT CTRCT9 HIS-116</scope>
</reference>
<reference key="43">
    <citation type="journal article" date="2008" name="Mol. Vis.">
        <title>Crystallin gene mutations in Indian families with inherited pediatric cataract.</title>
        <authorList>
            <person name="Devi R.R."/>
            <person name="Yao W."/>
            <person name="Vijayalakshmi P."/>
            <person name="Sergeev Y.V."/>
            <person name="Sundaresan P."/>
            <person name="Hejtmancik J.F."/>
        </authorList>
    </citation>
    <scope>VARIANTS CTRCT9 CYS-12; TRP-21 AND CYS-54</scope>
</reference>
<reference key="44">
    <citation type="journal article" date="2009" name="Biochim. Biophys. Acta">
        <title>A novel mutation (F71L) in alphaA-crystallin with defective chaperone-like function associated with age-related cataract.</title>
        <authorList>
            <person name="Bhagyalaxmi S.G."/>
            <person name="Srinivas P."/>
            <person name="Barton K.A."/>
            <person name="Kumar K.R."/>
            <person name="Vidyavathi M."/>
            <person name="Petrash J.M."/>
            <person name="Bhanuprakash Reddy G."/>
            <person name="Padma T."/>
        </authorList>
    </citation>
    <scope>VARIANT CTRCT9 LEU-71</scope>
    <scope>CHARACTERIZATION OF VARIANT CTRCT9 LEU-71</scope>
    <scope>FUNCTION</scope>
</reference>
<reference key="45">
    <citation type="journal article" date="2009" name="Mol. Vis.">
        <title>Mutation analysis of CRYAA, CRYGC, and CRYGD associated with autosomal dominant congenital cataract in Brazilian families.</title>
        <authorList>
            <person name="Santana A."/>
            <person name="Waiswol M."/>
            <person name="Arcieri E.S."/>
            <person name="Cabral de Vasconcellos J.P."/>
            <person name="Barbosa de Melo M."/>
        </authorList>
    </citation>
    <scope>VARIANT CTRCT9 CYS-12</scope>
</reference>
<reference key="46">
    <citation type="journal article" date="2009" name="Mol. Vis.">
        <title>An alphaA-crystallin gene mutation, Arg12Cys, causing inherited cataract-microcornea exhibits an altered heat-shock response.</title>
        <authorList>
            <person name="Zhang L.Y."/>
            <person name="Yam G.H."/>
            <person name="Tam P.O."/>
            <person name="Lai R.Y."/>
            <person name="Lam D.S."/>
            <person name="Pang C.P."/>
            <person name="Fan D.S."/>
        </authorList>
    </citation>
    <scope>CHARACTERIZATION OF VARIANT CTRCT9 CYS-12</scope>
    <scope>SUBCELLULAR LOCATION</scope>
</reference>
<reference key="47">
    <citation type="journal article" date="2009" name="Invest. Ophthalmol. Vis. Sci.">
        <title>Comprehensive mutational screening in a cohort of Danish families with hereditary congenital cataract.</title>
        <authorList>
            <person name="Hansen L."/>
            <person name="Mikkelsen A."/>
            <person name="Nuernberg P."/>
            <person name="Nuernberg G."/>
            <person name="Anjum I."/>
            <person name="Eiberg H."/>
            <person name="Rosenberg T."/>
        </authorList>
    </citation>
    <scope>VARIANTS CTRCT9 TRP-21 AND CYS-49</scope>
</reference>
<reference key="48">
    <citation type="journal article" date="2010" name="Curr. Eye Res.">
        <title>Autosomal dominant congenital nuclear cataracts caused by a CRYAA gene mutation.</title>
        <authorList>
            <person name="Li F.F."/>
            <person name="Yang M."/>
            <person name="Ma X."/>
            <person name="Zhang Q."/>
            <person name="Zhang M."/>
            <person name="Wang S.Z."/>
            <person name="Zhu S.Q."/>
        </authorList>
    </citation>
    <scope>VARIANT CTRCT9 CYS-116</scope>
</reference>
<reference key="49">
    <citation type="journal article" date="2011" name="Mol. Vis.">
        <title>Mutational screening of six genes in Chinese patients with congenital cataract and microcornea.</title>
        <authorList>
            <person name="Sun W."/>
            <person name="Xiao X."/>
            <person name="Li S."/>
            <person name="Guo X."/>
            <person name="Zhang Q."/>
        </authorList>
    </citation>
    <scope>VARIANT CTRCT9 CYS-12</scope>
</reference>
<reference key="50">
    <citation type="journal article" date="2011" name="Mol. Vis.">
        <title>Mutation analysis of 12 genes in Chinese families with congenital cataracts.</title>
        <authorList>
            <person name="Sun W."/>
            <person name="Xiao X."/>
            <person name="Li S."/>
            <person name="Guo X."/>
            <person name="Zhang Q."/>
        </authorList>
    </citation>
    <scope>VARIANTS CTRCT9 ARG-98 AND 117-ARG-TYR-118 DELINS HIS</scope>
</reference>
<reference key="51">
    <citation type="journal article" date="2011" name="Mol. Vis.">
        <title>Congenital anterior polar cataract associated with a missense mutation in the human alpha crystallin gene CRYAA.</title>
        <authorList>
            <person name="Zhang L."/>
            <person name="Zhang Y."/>
            <person name="Liu P."/>
            <person name="Cao W."/>
            <person name="Tang X."/>
            <person name="Su S."/>
        </authorList>
    </citation>
    <scope>VARIANT CTRCT9 HIS-116</scope>
</reference>
<reference key="52">
    <citation type="journal article" date="2012" name="Mol. Vis.">
        <title>A novel mutation in CRYAA is associated with autosomal dominant suture cataracts in a Chinese family.</title>
        <authorList>
            <person name="Su D."/>
            <person name="Guo Y."/>
            <person name="Li Q."/>
            <person name="Guan L."/>
            <person name="Zhu S."/>
            <person name="Ma X."/>
        </authorList>
    </citation>
    <scope>VARIANT CTRCT9 PRO-54</scope>
</reference>
<reference key="53">
    <citation type="journal article" date="2012" name="Ophthalmic Genet.">
        <title>Identification of the p. R116H mutation in a Chinese family with novel variable cataract phenotype: evidence for a mutational hot spot in alphaA-crystallin gene.</title>
        <authorList>
            <person name="Wang B."/>
            <person name="Wang K.J."/>
            <person name="Zhu S.Q."/>
            <person name="Wang J."/>
            <person name="Ma X."/>
        </authorList>
    </citation>
    <scope>VARIANT CTRCT9 HIS-116</scope>
</reference>
<reference key="54">
    <citation type="journal article" date="2013" name="Curr. Eye Res.">
        <title>A R54L mutation of CRYAA associated with autosomal dominant nuclear cataracts in a Chinese family.</title>
        <authorList>
            <person name="Yang Z."/>
            <person name="Su D."/>
            <person name="Li Q."/>
            <person name="Ma Z."/>
            <person name="Yang F."/>
            <person name="Zhu S."/>
            <person name="Ma X."/>
        </authorList>
    </citation>
    <scope>VARIANT CTRCT9 LEU-54</scope>
</reference>
<reference key="55">
    <citation type="journal article" date="2013" name="Hum. Genet.">
        <title>Whole exome sequencing in dominant cataract identifies a new causative factor, CRYBA2, and a variety of novel alleles in known genes.</title>
        <authorList>
            <person name="Reis L.M."/>
            <person name="Tyler R.C."/>
            <person name="Muheisen S."/>
            <person name="Raggio V."/>
            <person name="Salviati L."/>
            <person name="Han D.P."/>
            <person name="Costakos D."/>
            <person name="Yonath H."/>
            <person name="Hall S."/>
            <person name="Power P."/>
            <person name="Semina E.V."/>
        </authorList>
    </citation>
    <scope>VARIANT CTRCT9 CYS-12</scope>
</reference>
<reference key="56">
    <citation type="journal article" date="2013" name="Hum. Mutat.">
        <title>Identification of a novel oligomerization disrupting mutation in CRYAlphaA associated with congenital cataract in a South Australian family.</title>
        <authorList>
            <person name="Laurie K.J."/>
            <person name="Dave A."/>
            <person name="Straga T."/>
            <person name="Souzeau E."/>
            <person name="Chataway T."/>
            <person name="Sykes M.J."/>
            <person name="Casey T."/>
            <person name="Teo T."/>
            <person name="Pater J."/>
            <person name="Craig J.E."/>
            <person name="Sharma S."/>
            <person name="Burdon K.P."/>
        </authorList>
    </citation>
    <scope>CHARACTERIZATION OF VARIANT CTRCT9 GLN-21</scope>
    <scope>SUBUNIT</scope>
    <scope>TISSUE SPECIFICITY</scope>
</reference>
<reference key="57">
    <citation type="journal article" date="2013" name="Mol. Vis.">
        <title>Pathogenic mutations in two families with congenital cataract identified with whole-exome sequencing.</title>
        <authorList>
            <person name="Kondo Y."/>
            <person name="Saitsu H."/>
            <person name="Miyamoto T."/>
            <person name="Lee B.J."/>
            <person name="Nishiyama K."/>
            <person name="Nakashima M."/>
            <person name="Tsurusaki Y."/>
            <person name="Doi H."/>
            <person name="Miyake N."/>
            <person name="Kim J.H."/>
            <person name="Yu Y.S."/>
            <person name="Matsumoto N."/>
        </authorList>
    </citation>
    <scope>VARIANT CTRCT9 TRP-21</scope>
</reference>
<reference key="58">
    <citation type="journal article" date="2015" name="Genet. Mol. Res.">
        <title>A novel 3-base pair deletion of the CRYAA gene identified in a large Chinese pedigree featuring autosomal dominant congenital perinuclear cataract.</title>
        <authorList>
            <person name="Kong X.D."/>
            <person name="Liu N."/>
            <person name="Shi H.R."/>
            <person name="Dong J.M."/>
            <person name="Zhao Z.H."/>
            <person name="Liu J."/>
            <person name="Li-Ling J."/>
            <person name="Yang Y.X."/>
        </authorList>
    </citation>
    <scope>VARIANT CTRCT9 ARG-117 DEL</scope>
</reference>
<reference key="59">
    <citation type="journal article" date="2015" name="Mol. Med. Report.">
        <title>Mutation analysis of two families with inherited congenital cataracts.</title>
        <authorList>
            <person name="Liang C."/>
            <person name="Liang H."/>
            <person name="Yang Y."/>
            <person name="Ping L."/>
            <person name="Jie Q."/>
        </authorList>
    </citation>
    <scope>VARIANT CTRCT9 PRO-139</scope>
    <scope>SUBCELLULAR LOCATION</scope>
</reference>
<reference key="60">
    <citation type="journal article" date="2016" name="BMC Res. Notes">
        <title>Recurrent mutation in the crystallin alpha A gene associated with inherited paediatric cataract.</title>
        <authorList>
            <person name="Javadiyan S."/>
            <person name="Craig J.E."/>
            <person name="Souzeau E."/>
            <person name="Sharma S."/>
            <person name="Lower K.M."/>
            <person name="Pater J."/>
            <person name="Casey T."/>
            <person name="Hodson T."/>
            <person name="Burdon K.P."/>
        </authorList>
    </citation>
    <scope>VARIANT CTRCT9 GLN-21</scope>
</reference>
<reference key="61">
    <citation type="journal article" date="2017" name="G3 (Bethesda)">
        <title>High-Throughput Genetic Screening of 51 Pediatric Cataract Genes Identifies Causative Mutations in Inherited Pediatric Cataract in South Eastern Australia.</title>
        <authorList>
            <person name="Javadiyan S."/>
            <person name="Craig J.E."/>
            <person name="Souzeau E."/>
            <person name="Sharma S."/>
            <person name="Lower K.M."/>
            <person name="Mackey D.A."/>
            <person name="Staffieri S.E."/>
            <person name="Elder J.E."/>
            <person name="Taranath D."/>
            <person name="Straga T."/>
            <person name="Black J."/>
            <person name="Pater J."/>
            <person name="Casey T."/>
            <person name="Hewitt A.W."/>
            <person name="Burdon K.P."/>
        </authorList>
    </citation>
    <scope>VARIANT CTRCT9 CYS-54</scope>
</reference>
<reference key="62">
    <citation type="journal article" date="2017" name="Mol. Syndromol.">
        <title>Novel Mutations in the Crystallin Gene in Age-Related Cataract Patients from a North Indian Population.</title>
        <authorList>
            <person name="Patel R."/>
            <person name="Zenith R.K."/>
            <person name="Chandra A."/>
            <person name="Ali A."/>
        </authorList>
    </citation>
    <scope>VARIANTS CTRCT9 GLN-65 AND HIS-119</scope>
</reference>
<reference key="63">
    <citation type="journal article" date="2017" name="Mol. Vis.">
        <title>Mutations in crystallin genes result in congenital cataract associated with other ocular abnormalities.</title>
        <authorList>
            <person name="Sun Z."/>
            <person name="Zhou Q."/>
            <person name="Li H."/>
            <person name="Yang L."/>
            <person name="Wu S."/>
            <person name="Sui R."/>
        </authorList>
    </citation>
    <scope>VARIANT CTRCT9 TRP-21</scope>
</reference>
<reference key="64">
    <citation type="journal article" date="2018" name="BMC Med. Genet.">
        <title>A novel mutation in the CRYAA gene associated with congenital cataract and microphthalmia in a Chinese family.</title>
        <authorList>
            <person name="Song Z."/>
            <person name="Si N."/>
            <person name="Xiao W."/>
        </authorList>
    </citation>
    <scope>VARIANT CTRCT9 LEU-12</scope>
    <scope>CHARACTERIZATION OF VARIANT CTRCT9 LEU-12</scope>
    <scope>SUBCELLULAR LOCATION</scope>
</reference>
<reference key="65">
    <citation type="journal article" date="2018" name="Orphanet J. Rare Dis.">
        <title>Clinical and genetic characteristics of Chinese patients with familial or sporadic pediatric cataract.</title>
        <authorList>
            <person name="Li J."/>
            <person name="Leng Y."/>
            <person name="Han S."/>
            <person name="Yan L."/>
            <person name="Lu C."/>
            <person name="Luo Y."/>
            <person name="Zhang X."/>
            <person name="Cao L."/>
        </authorList>
    </citation>
    <scope>VARIANT CTRCT9 TRP-21</scope>
</reference>
<reference key="66">
    <citation type="journal article" date="2019" name="Mol. Vis.">
        <title>Mutation screening of crystallin genes in Chinese families with congenital cataracts.</title>
        <authorList>
            <person name="Zhuang J."/>
            <person name="Cao Z."/>
            <person name="Zhu Y."/>
            <person name="Liu L."/>
            <person name="Tong Y."/>
            <person name="Chen X."/>
            <person name="Wang Y."/>
            <person name="Lu C."/>
            <person name="Ma X."/>
            <person name="Yang J."/>
        </authorList>
    </citation>
    <scope>VARIANTS CTRCT9 LEU-12; TRP-21 AND CYS-116</scope>
</reference>
<reference key="67">
    <citation type="journal article" date="2020" name="Biosci. Rep.">
        <title>Clinical characteristics of congenital lamellar cataract and myopia in a Chinese family.</title>
        <authorList>
            <person name="Liu Q."/>
            <person name="Zhu S."/>
        </authorList>
    </citation>
    <scope>VARIANT CTRCT9 CYS-12</scope>
</reference>
<reference key="68">
    <citation type="journal article" date="2020" name="Orphanet J. Rare Dis.">
        <title>The genetic landscape of crystallins in congenital cataract.</title>
        <authorList>
            <person name="Berry V."/>
            <person name="Ionides A."/>
            <person name="Pontikos N."/>
            <person name="Georgiou M."/>
            <person name="Yu J."/>
            <person name="Ocaka L.A."/>
            <person name="Moore A.T."/>
            <person name="Quinlan R.A."/>
            <person name="Michaelides M."/>
        </authorList>
    </citation>
    <scope>VARIANT CTRCT9 CYS-49</scope>
</reference>